<dbReference type="EC" id="3.4.21.73"/>
<dbReference type="EMBL" id="M15476">
    <property type="protein sequence ID" value="AAA61253.1"/>
    <property type="molecule type" value="mRNA"/>
</dbReference>
<dbReference type="EMBL" id="X02760">
    <property type="protein sequence ID" value="CAA26535.1"/>
    <property type="molecule type" value="mRNA"/>
</dbReference>
<dbReference type="EMBL" id="D00244">
    <property type="protein sequence ID" value="BAA00175.1"/>
    <property type="molecule type" value="mRNA"/>
</dbReference>
<dbReference type="EMBL" id="K03226">
    <property type="protein sequence ID" value="AAC97138.1"/>
    <property type="molecule type" value="mRNA"/>
</dbReference>
<dbReference type="EMBL" id="X02419">
    <property type="protein sequence ID" value="CAA26268.1"/>
    <property type="molecule type" value="Genomic_DNA"/>
</dbReference>
<dbReference type="EMBL" id="AF377330">
    <property type="protein sequence ID" value="AAK53822.1"/>
    <property type="molecule type" value="Genomic_DNA"/>
</dbReference>
<dbReference type="EMBL" id="BT007391">
    <property type="protein sequence ID" value="AAP36055.1"/>
    <property type="molecule type" value="mRNA"/>
</dbReference>
<dbReference type="EMBL" id="AK298560">
    <property type="protein sequence ID" value="BAG60754.1"/>
    <property type="molecule type" value="mRNA"/>
</dbReference>
<dbReference type="EMBL" id="AL596247">
    <property type="status" value="NOT_ANNOTATED_CDS"/>
    <property type="molecule type" value="Genomic_DNA"/>
</dbReference>
<dbReference type="EMBL" id="CH471083">
    <property type="protein sequence ID" value="EAW54544.1"/>
    <property type="molecule type" value="Genomic_DNA"/>
</dbReference>
<dbReference type="EMBL" id="BC013575">
    <property type="protein sequence ID" value="AAH13575.1"/>
    <property type="molecule type" value="mRNA"/>
</dbReference>
<dbReference type="EMBL" id="D11143">
    <property type="protein sequence ID" value="BAA01919.1"/>
    <property type="molecule type" value="mRNA"/>
</dbReference>
<dbReference type="EMBL" id="K02286">
    <property type="protein sequence ID" value="AAA61252.1"/>
    <property type="molecule type" value="Genomic_DNA"/>
</dbReference>
<dbReference type="CCDS" id="CCDS44442.1">
    <molecule id="P00749-2"/>
</dbReference>
<dbReference type="CCDS" id="CCDS7339.1">
    <molecule id="P00749-1"/>
</dbReference>
<dbReference type="PIR" id="A00931">
    <property type="entry name" value="UKHU"/>
</dbReference>
<dbReference type="RefSeq" id="NP_001138503.2">
    <molecule id="P00749-2"/>
    <property type="nucleotide sequence ID" value="NM_001145031.3"/>
</dbReference>
<dbReference type="RefSeq" id="NP_001306120.1">
    <property type="nucleotide sequence ID" value="NM_001319191.1"/>
</dbReference>
<dbReference type="RefSeq" id="NP_002649.2">
    <molecule id="P00749-1"/>
    <property type="nucleotide sequence ID" value="NM_002658.6"/>
</dbReference>
<dbReference type="RefSeq" id="XP_011538168.1">
    <molecule id="P00749-1"/>
    <property type="nucleotide sequence ID" value="XM_011539866.3"/>
</dbReference>
<dbReference type="RefSeq" id="XP_047281309.1">
    <molecule id="P00749-1"/>
    <property type="nucleotide sequence ID" value="XM_047425353.1"/>
</dbReference>
<dbReference type="PDB" id="1C5W">
    <property type="method" value="X-ray"/>
    <property type="resolution" value="1.94 A"/>
    <property type="chains" value="A=156-178, B=179-431"/>
</dbReference>
<dbReference type="PDB" id="1C5X">
    <property type="method" value="X-ray"/>
    <property type="resolution" value="1.75 A"/>
    <property type="chains" value="A=156-178, B=179-431"/>
</dbReference>
<dbReference type="PDB" id="1C5Y">
    <property type="method" value="X-ray"/>
    <property type="resolution" value="1.65 A"/>
    <property type="chains" value="A=156-178, B=179-431"/>
</dbReference>
<dbReference type="PDB" id="1C5Z">
    <property type="method" value="X-ray"/>
    <property type="resolution" value="1.85 A"/>
    <property type="chains" value="A=156-178, B=179-431"/>
</dbReference>
<dbReference type="PDB" id="1EJN">
    <property type="method" value="X-ray"/>
    <property type="resolution" value="1.80 A"/>
    <property type="chains" value="A=179-431"/>
</dbReference>
<dbReference type="PDB" id="1F5K">
    <property type="method" value="X-ray"/>
    <property type="resolution" value="1.80 A"/>
    <property type="chains" value="U=179-431"/>
</dbReference>
<dbReference type="PDB" id="1F5L">
    <property type="method" value="X-ray"/>
    <property type="resolution" value="2.10 A"/>
    <property type="chains" value="A=179-431"/>
</dbReference>
<dbReference type="PDB" id="1F92">
    <property type="method" value="X-ray"/>
    <property type="resolution" value="2.60 A"/>
    <property type="chains" value="A=179-431"/>
</dbReference>
<dbReference type="PDB" id="1FV9">
    <property type="method" value="X-ray"/>
    <property type="resolution" value="3.00 A"/>
    <property type="chains" value="A=179-423"/>
</dbReference>
<dbReference type="PDB" id="1GI7">
    <property type="method" value="X-ray"/>
    <property type="resolution" value="1.79 A"/>
    <property type="chains" value="A=156-178, B=179-423"/>
</dbReference>
<dbReference type="PDB" id="1GI8">
    <property type="method" value="X-ray"/>
    <property type="resolution" value="1.75 A"/>
    <property type="chains" value="A=156-178, B=179-423"/>
</dbReference>
<dbReference type="PDB" id="1GI9">
    <property type="method" value="X-ray"/>
    <property type="resolution" value="1.80 A"/>
    <property type="chains" value="A=156-178, B=179-423"/>
</dbReference>
<dbReference type="PDB" id="1GJ7">
    <property type="method" value="X-ray"/>
    <property type="resolution" value="1.50 A"/>
    <property type="chains" value="A=156-178, B=179-431"/>
</dbReference>
<dbReference type="PDB" id="1GJ8">
    <property type="method" value="X-ray"/>
    <property type="resolution" value="1.64 A"/>
    <property type="chains" value="A=156-178, B=179-431"/>
</dbReference>
<dbReference type="PDB" id="1GJ9">
    <property type="method" value="X-ray"/>
    <property type="resolution" value="1.80 A"/>
    <property type="chains" value="A=156-178, B=179-431"/>
</dbReference>
<dbReference type="PDB" id="1GJA">
    <property type="method" value="X-ray"/>
    <property type="resolution" value="1.56 A"/>
    <property type="chains" value="A=156-178, B=179-431"/>
</dbReference>
<dbReference type="PDB" id="1GJB">
    <property type="method" value="X-ray"/>
    <property type="resolution" value="1.90 A"/>
    <property type="chains" value="A=156-178, B=179-431"/>
</dbReference>
<dbReference type="PDB" id="1GJC">
    <property type="method" value="X-ray"/>
    <property type="resolution" value="1.73 A"/>
    <property type="chains" value="A=156-178, B=179-431"/>
</dbReference>
<dbReference type="PDB" id="1GJD">
    <property type="method" value="X-ray"/>
    <property type="resolution" value="1.75 A"/>
    <property type="chains" value="A=156-178, B=179-431"/>
</dbReference>
<dbReference type="PDB" id="1KDU">
    <property type="method" value="NMR"/>
    <property type="chains" value="A=69-153"/>
</dbReference>
<dbReference type="PDB" id="1LMW">
    <property type="method" value="X-ray"/>
    <property type="resolution" value="2.50 A"/>
    <property type="chains" value="A/C=156-178, B/D=179-431"/>
</dbReference>
<dbReference type="PDB" id="1O3P">
    <property type="method" value="X-ray"/>
    <property type="resolution" value="1.81 A"/>
    <property type="chains" value="A=156-178, B=179-431"/>
</dbReference>
<dbReference type="PDB" id="1O5A">
    <property type="method" value="X-ray"/>
    <property type="resolution" value="1.68 A"/>
    <property type="chains" value="A=156-178, B=179-431"/>
</dbReference>
<dbReference type="PDB" id="1O5B">
    <property type="method" value="X-ray"/>
    <property type="resolution" value="1.85 A"/>
    <property type="chains" value="A=156-178, B=179-431"/>
</dbReference>
<dbReference type="PDB" id="1O5C">
    <property type="method" value="X-ray"/>
    <property type="resolution" value="1.63 A"/>
    <property type="chains" value="A=156-178, B=179-431"/>
</dbReference>
<dbReference type="PDB" id="1OWD">
    <property type="method" value="X-ray"/>
    <property type="resolution" value="2.32 A"/>
    <property type="chains" value="A=179-423"/>
</dbReference>
<dbReference type="PDB" id="1OWE">
    <property type="method" value="X-ray"/>
    <property type="resolution" value="1.60 A"/>
    <property type="chains" value="A=179-423"/>
</dbReference>
<dbReference type="PDB" id="1OWH">
    <property type="method" value="X-ray"/>
    <property type="resolution" value="1.61 A"/>
    <property type="chains" value="A=179-423"/>
</dbReference>
<dbReference type="PDB" id="1OWI">
    <property type="method" value="X-ray"/>
    <property type="resolution" value="2.93 A"/>
    <property type="chains" value="A=179-423"/>
</dbReference>
<dbReference type="PDB" id="1OWJ">
    <property type="method" value="X-ray"/>
    <property type="resolution" value="3.10 A"/>
    <property type="chains" value="A=179-423"/>
</dbReference>
<dbReference type="PDB" id="1OWK">
    <property type="method" value="X-ray"/>
    <property type="resolution" value="2.80 A"/>
    <property type="chains" value="A=179-423"/>
</dbReference>
<dbReference type="PDB" id="1SC8">
    <property type="method" value="X-ray"/>
    <property type="resolution" value="2.40 A"/>
    <property type="chains" value="U=164-425"/>
</dbReference>
<dbReference type="PDB" id="1SQA">
    <property type="method" value="X-ray"/>
    <property type="resolution" value="2.00 A"/>
    <property type="chains" value="A=179-423"/>
</dbReference>
<dbReference type="PDB" id="1SQO">
    <property type="method" value="X-ray"/>
    <property type="resolution" value="1.84 A"/>
    <property type="chains" value="A=179-423"/>
</dbReference>
<dbReference type="PDB" id="1SQT">
    <property type="method" value="X-ray"/>
    <property type="resolution" value="1.90 A"/>
    <property type="chains" value="A=179-423"/>
</dbReference>
<dbReference type="PDB" id="1U6Q">
    <property type="method" value="X-ray"/>
    <property type="resolution" value="2.02 A"/>
    <property type="chains" value="A=179-423"/>
</dbReference>
<dbReference type="PDB" id="1URK">
    <property type="method" value="NMR"/>
    <property type="chains" value="A=26-155"/>
</dbReference>
<dbReference type="PDB" id="1VJ9">
    <property type="method" value="X-ray"/>
    <property type="resolution" value="2.40 A"/>
    <property type="chains" value="U=164-425"/>
</dbReference>
<dbReference type="PDB" id="1VJA">
    <property type="method" value="X-ray"/>
    <property type="resolution" value="2.00 A"/>
    <property type="chains" value="U=164-425"/>
</dbReference>
<dbReference type="PDB" id="1W0Z">
    <property type="method" value="X-ray"/>
    <property type="resolution" value="1.90 A"/>
    <property type="chains" value="U=179-425"/>
</dbReference>
<dbReference type="PDB" id="1W10">
    <property type="method" value="X-ray"/>
    <property type="resolution" value="2.00 A"/>
    <property type="chains" value="U=179-425"/>
</dbReference>
<dbReference type="PDB" id="1W11">
    <property type="method" value="X-ray"/>
    <property type="resolution" value="2.00 A"/>
    <property type="chains" value="U=179-425"/>
</dbReference>
<dbReference type="PDB" id="1W12">
    <property type="method" value="X-ray"/>
    <property type="resolution" value="2.40 A"/>
    <property type="chains" value="U=179-425"/>
</dbReference>
<dbReference type="PDB" id="1W13">
    <property type="method" value="X-ray"/>
    <property type="resolution" value="2.00 A"/>
    <property type="chains" value="U=179-425"/>
</dbReference>
<dbReference type="PDB" id="1W14">
    <property type="method" value="X-ray"/>
    <property type="resolution" value="2.20 A"/>
    <property type="chains" value="U=179-425"/>
</dbReference>
<dbReference type="PDB" id="2FD6">
    <property type="method" value="X-ray"/>
    <property type="resolution" value="1.90 A"/>
    <property type="chains" value="A=31-152"/>
</dbReference>
<dbReference type="PDB" id="2I9A">
    <property type="method" value="X-ray"/>
    <property type="resolution" value="1.90 A"/>
    <property type="chains" value="A/B/C/D=21-163"/>
</dbReference>
<dbReference type="PDB" id="2I9B">
    <property type="method" value="X-ray"/>
    <property type="resolution" value="2.80 A"/>
    <property type="chains" value="A/B/C/D=21-163"/>
</dbReference>
<dbReference type="PDB" id="2NWN">
    <property type="method" value="X-ray"/>
    <property type="resolution" value="2.15 A"/>
    <property type="chains" value="A=179-431"/>
</dbReference>
<dbReference type="PDB" id="2O8T">
    <property type="method" value="X-ray"/>
    <property type="resolution" value="1.45 A"/>
    <property type="chains" value="A=179-431"/>
</dbReference>
<dbReference type="PDB" id="2O8U">
    <property type="method" value="X-ray"/>
    <property type="resolution" value="1.70 A"/>
    <property type="chains" value="A=179-431"/>
</dbReference>
<dbReference type="PDB" id="2O8W">
    <property type="method" value="X-ray"/>
    <property type="resolution" value="1.86 A"/>
    <property type="chains" value="A=179-431"/>
</dbReference>
<dbReference type="PDB" id="2R2W">
    <property type="method" value="X-ray"/>
    <property type="resolution" value="2.01 A"/>
    <property type="chains" value="U=179-431"/>
</dbReference>
<dbReference type="PDB" id="2VIN">
    <property type="method" value="X-ray"/>
    <property type="resolution" value="1.90 A"/>
    <property type="chains" value="A=179-431"/>
</dbReference>
<dbReference type="PDB" id="2VIO">
    <property type="method" value="X-ray"/>
    <property type="resolution" value="1.80 A"/>
    <property type="chains" value="A=179-431"/>
</dbReference>
<dbReference type="PDB" id="2VIP">
    <property type="method" value="X-ray"/>
    <property type="resolution" value="1.72 A"/>
    <property type="chains" value="A=179-431"/>
</dbReference>
<dbReference type="PDB" id="2VIQ">
    <property type="method" value="X-ray"/>
    <property type="resolution" value="2.00 A"/>
    <property type="chains" value="A=179-431"/>
</dbReference>
<dbReference type="PDB" id="2VIV">
    <property type="method" value="X-ray"/>
    <property type="resolution" value="1.72 A"/>
    <property type="chains" value="A=179-431"/>
</dbReference>
<dbReference type="PDB" id="2VIW">
    <property type="method" value="X-ray"/>
    <property type="resolution" value="2.05 A"/>
    <property type="chains" value="A=179-431"/>
</dbReference>
<dbReference type="PDB" id="2VNT">
    <property type="method" value="X-ray"/>
    <property type="resolution" value="2.20 A"/>
    <property type="chains" value="A/B/C/D/E/F=156-431"/>
</dbReference>
<dbReference type="PDB" id="3BT1">
    <property type="method" value="X-ray"/>
    <property type="resolution" value="2.80 A"/>
    <property type="chains" value="A=21-153"/>
</dbReference>
<dbReference type="PDB" id="3BT2">
    <property type="method" value="X-ray"/>
    <property type="resolution" value="2.50 A"/>
    <property type="chains" value="A=21-153"/>
</dbReference>
<dbReference type="PDB" id="3IG6">
    <property type="method" value="X-ray"/>
    <property type="resolution" value="1.83 A"/>
    <property type="chains" value="A/C=156-178, B/D=179-431"/>
</dbReference>
<dbReference type="PDB" id="3KGP">
    <property type="method" value="X-ray"/>
    <property type="resolution" value="2.35 A"/>
    <property type="chains" value="A=179-431"/>
</dbReference>
<dbReference type="PDB" id="3KHV">
    <property type="method" value="X-ray"/>
    <property type="resolution" value="2.35 A"/>
    <property type="chains" value="A=179-431"/>
</dbReference>
<dbReference type="PDB" id="3KID">
    <property type="method" value="X-ray"/>
    <property type="resolution" value="2.71 A"/>
    <property type="chains" value="U=179-431"/>
</dbReference>
<dbReference type="PDB" id="3M61">
    <property type="method" value="X-ray"/>
    <property type="resolution" value="1.68 A"/>
    <property type="chains" value="U=179-431"/>
</dbReference>
<dbReference type="PDB" id="3MHW">
    <property type="method" value="X-ray"/>
    <property type="resolution" value="1.45 A"/>
    <property type="chains" value="U=179-425"/>
</dbReference>
<dbReference type="PDB" id="3MWI">
    <property type="method" value="X-ray"/>
    <property type="resolution" value="2.03 A"/>
    <property type="chains" value="U=179-424"/>
</dbReference>
<dbReference type="PDB" id="3OX7">
    <property type="method" value="X-ray"/>
    <property type="resolution" value="1.58 A"/>
    <property type="chains" value="U=179-431"/>
</dbReference>
<dbReference type="PDB" id="3OY5">
    <property type="method" value="X-ray"/>
    <property type="resolution" value="2.31 A"/>
    <property type="chains" value="U=179-431"/>
</dbReference>
<dbReference type="PDB" id="3OY6">
    <property type="method" value="X-ray"/>
    <property type="resolution" value="2.31 A"/>
    <property type="chains" value="U=179-431"/>
</dbReference>
<dbReference type="PDB" id="3PB1">
    <property type="method" value="X-ray"/>
    <property type="resolution" value="2.30 A"/>
    <property type="chains" value="E=179-431"/>
</dbReference>
<dbReference type="PDB" id="3QN7">
    <property type="method" value="X-ray"/>
    <property type="resolution" value="1.90 A"/>
    <property type="chains" value="A=179-431"/>
</dbReference>
<dbReference type="PDB" id="3U73">
    <property type="method" value="X-ray"/>
    <property type="resolution" value="3.19 A"/>
    <property type="chains" value="A=21-152"/>
</dbReference>
<dbReference type="PDB" id="4DVA">
    <property type="method" value="X-ray"/>
    <property type="resolution" value="1.94 A"/>
    <property type="chains" value="U=179-424"/>
</dbReference>
<dbReference type="PDB" id="4DW2">
    <property type="method" value="X-ray"/>
    <property type="resolution" value="2.97 A"/>
    <property type="chains" value="U=179-424"/>
</dbReference>
<dbReference type="PDB" id="4FU7">
    <property type="method" value="X-ray"/>
    <property type="resolution" value="2.00 A"/>
    <property type="chains" value="A=179-424"/>
</dbReference>
<dbReference type="PDB" id="4FU8">
    <property type="method" value="X-ray"/>
    <property type="resolution" value="2.20 A"/>
    <property type="chains" value="A=179-424"/>
</dbReference>
<dbReference type="PDB" id="4FU9">
    <property type="method" value="X-ray"/>
    <property type="resolution" value="1.60 A"/>
    <property type="chains" value="A=179-424"/>
</dbReference>
<dbReference type="PDB" id="4FUB">
    <property type="method" value="X-ray"/>
    <property type="resolution" value="1.90 A"/>
    <property type="chains" value="A=179-424"/>
</dbReference>
<dbReference type="PDB" id="4FUC">
    <property type="method" value="X-ray"/>
    <property type="resolution" value="1.72 A"/>
    <property type="chains" value="A=179-424"/>
</dbReference>
<dbReference type="PDB" id="4FUD">
    <property type="method" value="X-ray"/>
    <property type="resolution" value="2.00 A"/>
    <property type="chains" value="A=179-424"/>
</dbReference>
<dbReference type="PDB" id="4FUE">
    <property type="method" value="X-ray"/>
    <property type="resolution" value="2.00 A"/>
    <property type="chains" value="A=179-424"/>
</dbReference>
<dbReference type="PDB" id="4FUF">
    <property type="method" value="X-ray"/>
    <property type="resolution" value="2.00 A"/>
    <property type="chains" value="A=179-424"/>
</dbReference>
<dbReference type="PDB" id="4FUG">
    <property type="method" value="X-ray"/>
    <property type="resolution" value="1.80 A"/>
    <property type="chains" value="A=179-424"/>
</dbReference>
<dbReference type="PDB" id="4FUH">
    <property type="method" value="X-ray"/>
    <property type="resolution" value="1.60 A"/>
    <property type="chains" value="A=179-424"/>
</dbReference>
<dbReference type="PDB" id="4FUI">
    <property type="method" value="X-ray"/>
    <property type="resolution" value="2.00 A"/>
    <property type="chains" value="A=179-424"/>
</dbReference>
<dbReference type="PDB" id="4FUJ">
    <property type="method" value="X-ray"/>
    <property type="resolution" value="2.05 A"/>
    <property type="chains" value="A=179-424"/>
</dbReference>
<dbReference type="PDB" id="4GLY">
    <property type="method" value="X-ray"/>
    <property type="resolution" value="1.52 A"/>
    <property type="chains" value="A=179-423"/>
</dbReference>
<dbReference type="PDB" id="4H42">
    <property type="method" value="X-ray"/>
    <property type="resolution" value="2.01 A"/>
    <property type="chains" value="U=179-426"/>
</dbReference>
<dbReference type="PDB" id="4JK5">
    <property type="method" value="X-ray"/>
    <property type="resolution" value="1.55 A"/>
    <property type="chains" value="A=179-423"/>
</dbReference>
<dbReference type="PDB" id="4JK6">
    <property type="method" value="X-ray"/>
    <property type="resolution" value="2.20 A"/>
    <property type="chains" value="A=179-423"/>
</dbReference>
<dbReference type="PDB" id="4K24">
    <property type="method" value="X-ray"/>
    <property type="resolution" value="4.50 A"/>
    <property type="chains" value="A=21-153"/>
</dbReference>
<dbReference type="PDB" id="4MNV">
    <property type="method" value="X-ray"/>
    <property type="resolution" value="1.80 A"/>
    <property type="chains" value="A=179-423"/>
</dbReference>
<dbReference type="PDB" id="4MNW">
    <property type="method" value="X-ray"/>
    <property type="resolution" value="1.49 A"/>
    <property type="chains" value="A=179-423"/>
</dbReference>
<dbReference type="PDB" id="4MNX">
    <property type="method" value="X-ray"/>
    <property type="resolution" value="1.85 A"/>
    <property type="chains" value="A=179-423"/>
</dbReference>
<dbReference type="PDB" id="4MNY">
    <property type="method" value="X-ray"/>
    <property type="resolution" value="1.70 A"/>
    <property type="chains" value="A/B=179-423"/>
</dbReference>
<dbReference type="PDB" id="4OS1">
    <property type="method" value="X-ray"/>
    <property type="resolution" value="2.20 A"/>
    <property type="chains" value="A=179-423"/>
</dbReference>
<dbReference type="PDB" id="4OS2">
    <property type="method" value="X-ray"/>
    <property type="resolution" value="1.79 A"/>
    <property type="chains" value="A=179-423"/>
</dbReference>
<dbReference type="PDB" id="4OS4">
    <property type="method" value="X-ray"/>
    <property type="resolution" value="2.00 A"/>
    <property type="chains" value="A=179-423"/>
</dbReference>
<dbReference type="PDB" id="4OS5">
    <property type="method" value="X-ray"/>
    <property type="resolution" value="2.26 A"/>
    <property type="chains" value="A=179-423"/>
</dbReference>
<dbReference type="PDB" id="4OS6">
    <property type="method" value="X-ray"/>
    <property type="resolution" value="1.75 A"/>
    <property type="chains" value="A=179-423"/>
</dbReference>
<dbReference type="PDB" id="4OS7">
    <property type="method" value="X-ray"/>
    <property type="resolution" value="2.00 A"/>
    <property type="chains" value="A=179-423"/>
</dbReference>
<dbReference type="PDB" id="4X0W">
    <property type="method" value="X-ray"/>
    <property type="resolution" value="2.10 A"/>
    <property type="chains" value="U=179-425"/>
</dbReference>
<dbReference type="PDB" id="4X1N">
    <property type="method" value="X-ray"/>
    <property type="resolution" value="1.80 A"/>
    <property type="chains" value="U=179-425"/>
</dbReference>
<dbReference type="PDB" id="4X1P">
    <property type="method" value="X-ray"/>
    <property type="resolution" value="1.60 A"/>
    <property type="chains" value="U=179-425"/>
</dbReference>
<dbReference type="PDB" id="4X1Q">
    <property type="method" value="X-ray"/>
    <property type="resolution" value="2.28 A"/>
    <property type="chains" value="U=179-425"/>
</dbReference>
<dbReference type="PDB" id="4X1R">
    <property type="method" value="X-ray"/>
    <property type="resolution" value="2.10 A"/>
    <property type="chains" value="U=179-425"/>
</dbReference>
<dbReference type="PDB" id="4X1S">
    <property type="method" value="X-ray"/>
    <property type="resolution" value="1.90 A"/>
    <property type="chains" value="U=179-425"/>
</dbReference>
<dbReference type="PDB" id="4XSK">
    <property type="method" value="X-ray"/>
    <property type="resolution" value="1.50 A"/>
    <property type="chains" value="U=179-424"/>
</dbReference>
<dbReference type="PDB" id="4ZHL">
    <property type="method" value="X-ray"/>
    <property type="resolution" value="2.06 A"/>
    <property type="chains" value="U=179-425"/>
</dbReference>
<dbReference type="PDB" id="4ZHM">
    <property type="method" value="X-ray"/>
    <property type="resolution" value="1.90 A"/>
    <property type="chains" value="U=179-425"/>
</dbReference>
<dbReference type="PDB" id="4ZKN">
    <property type="method" value="X-ray"/>
    <property type="resolution" value="1.36 A"/>
    <property type="chains" value="U=179-425"/>
</dbReference>
<dbReference type="PDB" id="4ZKO">
    <property type="method" value="X-ray"/>
    <property type="resolution" value="1.29 A"/>
    <property type="chains" value="U=179-425"/>
</dbReference>
<dbReference type="PDB" id="4ZKR">
    <property type="method" value="X-ray"/>
    <property type="resolution" value="1.36 A"/>
    <property type="chains" value="U=179-425"/>
</dbReference>
<dbReference type="PDB" id="4ZKS">
    <property type="method" value="X-ray"/>
    <property type="resolution" value="1.85 A"/>
    <property type="chains" value="U=179-425"/>
</dbReference>
<dbReference type="PDB" id="5HGG">
    <property type="method" value="X-ray"/>
    <property type="resolution" value="1.97 A"/>
    <property type="chains" value="A/B=179-424"/>
</dbReference>
<dbReference type="PDB" id="5WXF">
    <property type="method" value="X-ray"/>
    <property type="resolution" value="1.46 A"/>
    <property type="chains" value="U=179-431"/>
</dbReference>
<dbReference type="PDB" id="5WXO">
    <property type="method" value="X-ray"/>
    <property type="resolution" value="1.64 A"/>
    <property type="chains" value="U=179-431"/>
</dbReference>
<dbReference type="PDB" id="5WXP">
    <property type="method" value="X-ray"/>
    <property type="resolution" value="1.75 A"/>
    <property type="chains" value="U=179-431"/>
</dbReference>
<dbReference type="PDB" id="5WXQ">
    <property type="method" value="X-ray"/>
    <property type="resolution" value="1.79 A"/>
    <property type="chains" value="U=179-431"/>
</dbReference>
<dbReference type="PDB" id="5WXR">
    <property type="method" value="X-ray"/>
    <property type="resolution" value="1.75 A"/>
    <property type="chains" value="U=179-431"/>
</dbReference>
<dbReference type="PDB" id="5WXS">
    <property type="method" value="X-ray"/>
    <property type="resolution" value="2.30 A"/>
    <property type="chains" value="U=179-431"/>
</dbReference>
<dbReference type="PDB" id="5WXT">
    <property type="method" value="X-ray"/>
    <property type="resolution" value="2.10 A"/>
    <property type="chains" value="U=179-431"/>
</dbReference>
<dbReference type="PDB" id="5XG4">
    <property type="method" value="X-ray"/>
    <property type="resolution" value="3.00 A"/>
    <property type="chains" value="U=179-424"/>
</dbReference>
<dbReference type="PDB" id="5YC6">
    <property type="method" value="X-ray"/>
    <property type="resolution" value="1.18 A"/>
    <property type="chains" value="U=179-424"/>
</dbReference>
<dbReference type="PDB" id="5YC7">
    <property type="method" value="X-ray"/>
    <property type="resolution" value="2.00 A"/>
    <property type="chains" value="U=179-424"/>
</dbReference>
<dbReference type="PDB" id="5Z1C">
    <property type="method" value="X-ray"/>
    <property type="resolution" value="1.45 A"/>
    <property type="chains" value="U=179-423"/>
</dbReference>
<dbReference type="PDB" id="5ZA7">
    <property type="method" value="X-ray"/>
    <property type="resolution" value="1.70 A"/>
    <property type="chains" value="U=179-431"/>
</dbReference>
<dbReference type="PDB" id="5ZA8">
    <property type="method" value="X-ray"/>
    <property type="resolution" value="1.90 A"/>
    <property type="chains" value="U=179-431"/>
</dbReference>
<dbReference type="PDB" id="5ZA9">
    <property type="method" value="X-ray"/>
    <property type="resolution" value="1.62 A"/>
    <property type="chains" value="U=179-431"/>
</dbReference>
<dbReference type="PDB" id="5ZAE">
    <property type="method" value="X-ray"/>
    <property type="resolution" value="1.73 A"/>
    <property type="chains" value="U=179-431"/>
</dbReference>
<dbReference type="PDB" id="5ZAF">
    <property type="method" value="X-ray"/>
    <property type="resolution" value="1.65 A"/>
    <property type="chains" value="U=179-431"/>
</dbReference>
<dbReference type="PDB" id="5ZAG">
    <property type="method" value="X-ray"/>
    <property type="resolution" value="1.95 A"/>
    <property type="chains" value="U=179-431"/>
</dbReference>
<dbReference type="PDB" id="5ZAH">
    <property type="method" value="X-ray"/>
    <property type="resolution" value="2.98 A"/>
    <property type="chains" value="U=179-431"/>
</dbReference>
<dbReference type="PDB" id="5ZAJ">
    <property type="method" value="X-ray"/>
    <property type="resolution" value="1.65 A"/>
    <property type="chains" value="U=179-431"/>
</dbReference>
<dbReference type="PDB" id="5ZC5">
    <property type="method" value="X-ray"/>
    <property type="resolution" value="1.90 A"/>
    <property type="chains" value="U=179-431"/>
</dbReference>
<dbReference type="PDB" id="6AG2">
    <property type="method" value="X-ray"/>
    <property type="resolution" value="1.77 A"/>
    <property type="chains" value="U=179-431"/>
</dbReference>
<dbReference type="PDB" id="6AG3">
    <property type="method" value="X-ray"/>
    <property type="resolution" value="2.48 A"/>
    <property type="chains" value="U=179-431"/>
</dbReference>
<dbReference type="PDB" id="6AG7">
    <property type="method" value="X-ray"/>
    <property type="resolution" value="1.90 A"/>
    <property type="chains" value="U=179-423"/>
</dbReference>
<dbReference type="PDB" id="6AG9">
    <property type="method" value="X-ray"/>
    <property type="resolution" value="1.63 A"/>
    <property type="chains" value="U=179-431"/>
</dbReference>
<dbReference type="PDB" id="6JYP">
    <property type="method" value="X-ray"/>
    <property type="resolution" value="2.25 A"/>
    <property type="chains" value="U=179-424"/>
</dbReference>
<dbReference type="PDB" id="6JYQ">
    <property type="method" value="X-ray"/>
    <property type="resolution" value="1.75 A"/>
    <property type="chains" value="U=179-424"/>
</dbReference>
<dbReference type="PDB" id="6L04">
    <property type="method" value="X-ray"/>
    <property type="resolution" value="2.21 A"/>
    <property type="chains" value="U=179-423"/>
</dbReference>
<dbReference type="PDB" id="6L05">
    <property type="method" value="X-ray"/>
    <property type="resolution" value="2.49 A"/>
    <property type="chains" value="U=179-423"/>
</dbReference>
<dbReference type="PDB" id="6NMB">
    <property type="method" value="X-ray"/>
    <property type="resolution" value="2.30 A"/>
    <property type="chains" value="A/B/C/D=162-431"/>
</dbReference>
<dbReference type="PDB" id="6XVD">
    <property type="method" value="X-ray"/>
    <property type="resolution" value="1.40 A"/>
    <property type="chains" value="U=179-431"/>
</dbReference>
<dbReference type="PDB" id="7DZD">
    <property type="method" value="X-ray"/>
    <property type="resolution" value="2.00 A"/>
    <property type="chains" value="U=179-423"/>
</dbReference>
<dbReference type="PDB" id="7VM4">
    <property type="method" value="X-ray"/>
    <property type="resolution" value="2.01 A"/>
    <property type="chains" value="U=179-423"/>
</dbReference>
<dbReference type="PDB" id="7VM5">
    <property type="method" value="X-ray"/>
    <property type="resolution" value="1.97 A"/>
    <property type="chains" value="U=179-424"/>
</dbReference>
<dbReference type="PDB" id="7VM6">
    <property type="method" value="X-ray"/>
    <property type="resolution" value="1.79 A"/>
    <property type="chains" value="U=179-426"/>
</dbReference>
<dbReference type="PDB" id="7VM7">
    <property type="method" value="X-ray"/>
    <property type="resolution" value="1.87 A"/>
    <property type="chains" value="U=179-423"/>
</dbReference>
<dbReference type="PDB" id="7ZRR">
    <property type="method" value="X-ray"/>
    <property type="resolution" value="1.64 A"/>
    <property type="chains" value="A=154-431"/>
</dbReference>
<dbReference type="PDB" id="7ZRT">
    <property type="method" value="X-ray"/>
    <property type="resolution" value="1.80 A"/>
    <property type="chains" value="A=179-431"/>
</dbReference>
<dbReference type="PDBsum" id="1C5W"/>
<dbReference type="PDBsum" id="1C5X"/>
<dbReference type="PDBsum" id="1C5Y"/>
<dbReference type="PDBsum" id="1C5Z"/>
<dbReference type="PDBsum" id="1EJN"/>
<dbReference type="PDBsum" id="1F5K"/>
<dbReference type="PDBsum" id="1F5L"/>
<dbReference type="PDBsum" id="1F92"/>
<dbReference type="PDBsum" id="1FV9"/>
<dbReference type="PDBsum" id="1GI7"/>
<dbReference type="PDBsum" id="1GI8"/>
<dbReference type="PDBsum" id="1GI9"/>
<dbReference type="PDBsum" id="1GJ7"/>
<dbReference type="PDBsum" id="1GJ8"/>
<dbReference type="PDBsum" id="1GJ9"/>
<dbReference type="PDBsum" id="1GJA"/>
<dbReference type="PDBsum" id="1GJB"/>
<dbReference type="PDBsum" id="1GJC"/>
<dbReference type="PDBsum" id="1GJD"/>
<dbReference type="PDBsum" id="1KDU"/>
<dbReference type="PDBsum" id="1LMW"/>
<dbReference type="PDBsum" id="1O3P"/>
<dbReference type="PDBsum" id="1O5A"/>
<dbReference type="PDBsum" id="1O5B"/>
<dbReference type="PDBsum" id="1O5C"/>
<dbReference type="PDBsum" id="1OWD"/>
<dbReference type="PDBsum" id="1OWE"/>
<dbReference type="PDBsum" id="1OWH"/>
<dbReference type="PDBsum" id="1OWI"/>
<dbReference type="PDBsum" id="1OWJ"/>
<dbReference type="PDBsum" id="1OWK"/>
<dbReference type="PDBsum" id="1SC8"/>
<dbReference type="PDBsum" id="1SQA"/>
<dbReference type="PDBsum" id="1SQO"/>
<dbReference type="PDBsum" id="1SQT"/>
<dbReference type="PDBsum" id="1U6Q"/>
<dbReference type="PDBsum" id="1URK"/>
<dbReference type="PDBsum" id="1VJ9"/>
<dbReference type="PDBsum" id="1VJA"/>
<dbReference type="PDBsum" id="1W0Z"/>
<dbReference type="PDBsum" id="1W10"/>
<dbReference type="PDBsum" id="1W11"/>
<dbReference type="PDBsum" id="1W12"/>
<dbReference type="PDBsum" id="1W13"/>
<dbReference type="PDBsum" id="1W14"/>
<dbReference type="PDBsum" id="2FD6"/>
<dbReference type="PDBsum" id="2I9A"/>
<dbReference type="PDBsum" id="2I9B"/>
<dbReference type="PDBsum" id="2NWN"/>
<dbReference type="PDBsum" id="2O8T"/>
<dbReference type="PDBsum" id="2O8U"/>
<dbReference type="PDBsum" id="2O8W"/>
<dbReference type="PDBsum" id="2R2W"/>
<dbReference type="PDBsum" id="2VIN"/>
<dbReference type="PDBsum" id="2VIO"/>
<dbReference type="PDBsum" id="2VIP"/>
<dbReference type="PDBsum" id="2VIQ"/>
<dbReference type="PDBsum" id="2VIV"/>
<dbReference type="PDBsum" id="2VIW"/>
<dbReference type="PDBsum" id="2VNT"/>
<dbReference type="PDBsum" id="3BT1"/>
<dbReference type="PDBsum" id="3BT2"/>
<dbReference type="PDBsum" id="3IG6"/>
<dbReference type="PDBsum" id="3KGP"/>
<dbReference type="PDBsum" id="3KHV"/>
<dbReference type="PDBsum" id="3KID"/>
<dbReference type="PDBsum" id="3M61"/>
<dbReference type="PDBsum" id="3MHW"/>
<dbReference type="PDBsum" id="3MWI"/>
<dbReference type="PDBsum" id="3OX7"/>
<dbReference type="PDBsum" id="3OY5"/>
<dbReference type="PDBsum" id="3OY6"/>
<dbReference type="PDBsum" id="3PB1"/>
<dbReference type="PDBsum" id="3QN7"/>
<dbReference type="PDBsum" id="3U73"/>
<dbReference type="PDBsum" id="4DVA"/>
<dbReference type="PDBsum" id="4DW2"/>
<dbReference type="PDBsum" id="4FU7"/>
<dbReference type="PDBsum" id="4FU8"/>
<dbReference type="PDBsum" id="4FU9"/>
<dbReference type="PDBsum" id="4FUB"/>
<dbReference type="PDBsum" id="4FUC"/>
<dbReference type="PDBsum" id="4FUD"/>
<dbReference type="PDBsum" id="4FUE"/>
<dbReference type="PDBsum" id="4FUF"/>
<dbReference type="PDBsum" id="4FUG"/>
<dbReference type="PDBsum" id="4FUH"/>
<dbReference type="PDBsum" id="4FUI"/>
<dbReference type="PDBsum" id="4FUJ"/>
<dbReference type="PDBsum" id="4GLY"/>
<dbReference type="PDBsum" id="4H42"/>
<dbReference type="PDBsum" id="4JK5"/>
<dbReference type="PDBsum" id="4JK6"/>
<dbReference type="PDBsum" id="4K24"/>
<dbReference type="PDBsum" id="4MNV"/>
<dbReference type="PDBsum" id="4MNW"/>
<dbReference type="PDBsum" id="4MNX"/>
<dbReference type="PDBsum" id="4MNY"/>
<dbReference type="PDBsum" id="4OS1"/>
<dbReference type="PDBsum" id="4OS2"/>
<dbReference type="PDBsum" id="4OS4"/>
<dbReference type="PDBsum" id="4OS5"/>
<dbReference type="PDBsum" id="4OS6"/>
<dbReference type="PDBsum" id="4OS7"/>
<dbReference type="PDBsum" id="4X0W"/>
<dbReference type="PDBsum" id="4X1N"/>
<dbReference type="PDBsum" id="4X1P"/>
<dbReference type="PDBsum" id="4X1Q"/>
<dbReference type="PDBsum" id="4X1R"/>
<dbReference type="PDBsum" id="4X1S"/>
<dbReference type="PDBsum" id="4XSK"/>
<dbReference type="PDBsum" id="4ZHL"/>
<dbReference type="PDBsum" id="4ZHM"/>
<dbReference type="PDBsum" id="4ZKN"/>
<dbReference type="PDBsum" id="4ZKO"/>
<dbReference type="PDBsum" id="4ZKR"/>
<dbReference type="PDBsum" id="4ZKS"/>
<dbReference type="PDBsum" id="5HGG"/>
<dbReference type="PDBsum" id="5WXF"/>
<dbReference type="PDBsum" id="5WXO"/>
<dbReference type="PDBsum" id="5WXP"/>
<dbReference type="PDBsum" id="5WXQ"/>
<dbReference type="PDBsum" id="5WXR"/>
<dbReference type="PDBsum" id="5WXS"/>
<dbReference type="PDBsum" id="5WXT"/>
<dbReference type="PDBsum" id="5XG4"/>
<dbReference type="PDBsum" id="5YC6"/>
<dbReference type="PDBsum" id="5YC7"/>
<dbReference type="PDBsum" id="5Z1C"/>
<dbReference type="PDBsum" id="5ZA7"/>
<dbReference type="PDBsum" id="5ZA8"/>
<dbReference type="PDBsum" id="5ZA9"/>
<dbReference type="PDBsum" id="5ZAE"/>
<dbReference type="PDBsum" id="5ZAF"/>
<dbReference type="PDBsum" id="5ZAG"/>
<dbReference type="PDBsum" id="5ZAH"/>
<dbReference type="PDBsum" id="5ZAJ"/>
<dbReference type="PDBsum" id="5ZC5"/>
<dbReference type="PDBsum" id="6AG2"/>
<dbReference type="PDBsum" id="6AG3"/>
<dbReference type="PDBsum" id="6AG7"/>
<dbReference type="PDBsum" id="6AG9"/>
<dbReference type="PDBsum" id="6JYP"/>
<dbReference type="PDBsum" id="6JYQ"/>
<dbReference type="PDBsum" id="6L04"/>
<dbReference type="PDBsum" id="6L05"/>
<dbReference type="PDBsum" id="6NMB"/>
<dbReference type="PDBsum" id="6XVD"/>
<dbReference type="PDBsum" id="7DZD"/>
<dbReference type="PDBsum" id="7VM4"/>
<dbReference type="PDBsum" id="7VM5"/>
<dbReference type="PDBsum" id="7VM6"/>
<dbReference type="PDBsum" id="7VM7"/>
<dbReference type="PDBsum" id="7ZRR"/>
<dbReference type="PDBsum" id="7ZRT"/>
<dbReference type="BMRB" id="P00749"/>
<dbReference type="SASBDB" id="P00749"/>
<dbReference type="SMR" id="P00749"/>
<dbReference type="BioGRID" id="111344">
    <property type="interactions" value="89"/>
</dbReference>
<dbReference type="ComplexPortal" id="CPX-483">
    <property type="entry name" value="uPA-PAI-1 complex"/>
</dbReference>
<dbReference type="ComplexPortal" id="CPX-487">
    <property type="entry name" value="uPA-uPAR complex"/>
</dbReference>
<dbReference type="ComplexPortal" id="CPX-501">
    <property type="entry name" value="uPA-uPAR-vitronectin complex"/>
</dbReference>
<dbReference type="CORUM" id="P00749"/>
<dbReference type="DIP" id="DIP-46387N"/>
<dbReference type="ELM" id="P00749"/>
<dbReference type="FunCoup" id="P00749">
    <property type="interactions" value="391"/>
</dbReference>
<dbReference type="IntAct" id="P00749">
    <property type="interactions" value="36"/>
</dbReference>
<dbReference type="MINT" id="P00749"/>
<dbReference type="STRING" id="9606.ENSP00000361850"/>
<dbReference type="BindingDB" id="P00749"/>
<dbReference type="ChEMBL" id="CHEMBL3286"/>
<dbReference type="DrugBank" id="DB07129">
    <property type="generic name" value="(2R)-1-(2,6-dimethylphenoxy)propan-2-amine"/>
</dbReference>
<dbReference type="DrugBank" id="DB07122">
    <property type="generic name" value="1-[4-(2-oxo-2-phenylethyl)phenyl]guanidine"/>
</dbReference>
<dbReference type="DrugBank" id="DB01905">
    <property type="generic name" value="2-(2-Hydroxy-5-Methoxy-Phenyl)-1h-Benzoimidazole-5-Carboxamidine"/>
</dbReference>
<dbReference type="DrugBank" id="DB02463">
    <property type="generic name" value="2-(2-Hydroxy-Phenyl)-1h-Indole-5-Carboxamidine"/>
</dbReference>
<dbReference type="DrugBank" id="DB02287">
    <property type="generic name" value="2-(2-hydroxy-phenyl)-3H-benzoimidazole-5-carboxamidine"/>
</dbReference>
<dbReference type="DrugBank" id="DB03729">
    <property type="generic name" value="2-Amino-1H-benzimidazol-5-ol"/>
</dbReference>
<dbReference type="DrugBank" id="DB01725">
    <property type="generic name" value="2-{2-hydroxy-[1,1'-biphenyl]-3-yl}-1H-1,3-benzodiazole-5-carboximidamide"/>
</dbReference>
<dbReference type="DrugBank" id="DB08072">
    <property type="generic name" value="4-(2-AMINOETHOXY)-3,5-DICHLORO-N-[3-(1-METHYLETHOXY)PHENYL]BENZAMIDE"/>
</dbReference>
<dbReference type="DrugBank" id="DB07625">
    <property type="generic name" value="4-(2-aminoethoxy)-N-(2,5-diethoxyphenyl)-3,5-dimethylbenzamide"/>
</dbReference>
<dbReference type="DrugBank" id="DB07626">
    <property type="generic name" value="4-(2-aminoethoxy)-N-(3-chloro-2-ethoxy-5-piperidin-1-ylphenyl)-3,5-dimethylbenzamide"/>
</dbReference>
<dbReference type="DrugBank" id="DB08697">
    <property type="generic name" value="4-(2-aminoethoxy)-N-(3-chloro-5-piperidin-1-ylphenyl)-3,5-dimethylbenzamide"/>
</dbReference>
<dbReference type="DrugBank" id="DB03136">
    <property type="generic name" value="4-Iodobenzo[B]Thiophene-2-Carboxamidine"/>
</dbReference>
<dbReference type="DrugBank" id="DB01977">
    <property type="generic name" value="6-(N-Phenylcarbamyl)-2-Naphthalenecarboxamidine"/>
</dbReference>
<dbReference type="DrugBank" id="DB07076">
    <property type="generic name" value="6-[(Z)-AMINO(IMINO)METHYL]-N-[3-(CYCLOPENTYLOXY)PHENYL]-2-NAPHTHAMIDE"/>
</dbReference>
<dbReference type="DrugBank" id="DB03082">
    <property type="generic name" value="6-[(Z)-Amino(Imino)Methyl]-N-[4-(Aminomethyl)Phenyl]-4-(Pyrimidin-2-Ylamino)-2-Naphthamide"/>
</dbReference>
<dbReference type="DrugBank" id="DB02705">
    <property type="generic name" value="6-[N-(1-Isopropyl-1,2,3,4-Tetrahydro-7-Isoquinolinyl)Carbamyl]-2-Naphthalenecarboxamidine"/>
</dbReference>
<dbReference type="DrugBank" id="DB02473">
    <property type="generic name" value="6-[N-(1-Isopropyl-3,4-Dihydro-7-Isoquinolinyl)Carbamyl]-2-Naphthalenecarboxamidine"/>
</dbReference>
<dbReference type="DrugBank" id="DB02398">
    <property type="generic name" value="6-[N-(4-(Aminomethyl)Phenyl)Carbamyl]-2-Naphthalenecarboxamidine"/>
</dbReference>
<dbReference type="DrugBank" id="DB02551">
    <property type="generic name" value="6-[N-(4-Ethyl-1,2,3,4-Tetrahydro-6-Isoquinolinyl)Carbamyl]-2-Naphthalenecarboxamidine"/>
</dbReference>
<dbReference type="DrugBank" id="DB03865">
    <property type="generic name" value="6-Chloro-2-(2-Hydroxy-Biphenyl-3-Yl)-1h-Indole-5-Carboxamidine"/>
</dbReference>
<dbReference type="DrugBank" id="DB06855">
    <property type="generic name" value="6-fluoro-2-(2-hydroxy-3-isobutoxy-phenyl)-1H-benzoimidazole-5-carboxamidine"/>
</dbReference>
<dbReference type="DrugBank" id="DB06856">
    <property type="generic name" value="6-FLUORO-2-[2-HYDROXY-3-(2-METHYL-CYCLOHEXYLOXY)-PHENYL]-1H-INDOLE-5-CARBOXAMIDINE"/>
</dbReference>
<dbReference type="DrugBank" id="DB03046">
    <property type="generic name" value="7-Methoxy-8-[1-(Methylsulfonyl)-1h-Pyrazol-4-Yl]Naphthalene-2-Carboximidamide"/>
</dbReference>
<dbReference type="DrugBank" id="DB04059">
    <property type="generic name" value="8-(Pyrimidin-2-Ylamino)Naphthalene-2-Carboximidamide"/>
</dbReference>
<dbReference type="DrugBank" id="DB04172">
    <property type="generic name" value="[2,4,6-Triisopropyl-Phenylsulfonyl-L-[3-Amidino-Phenylalanine]]-Piperazine-N'-Beta-Alanine"/>
</dbReference>
<dbReference type="DrugBank" id="DB00594">
    <property type="generic name" value="Amiloride"/>
</dbReference>
<dbReference type="DrugBank" id="DB03127">
    <property type="generic name" value="Benzamidine"/>
</dbReference>
<dbReference type="DrugBank" id="DB02526">
    <property type="generic name" value="CRA_10655"/>
</dbReference>
<dbReference type="DrugBank" id="DB03159">
    <property type="generic name" value="CRA_8696"/>
</dbReference>
<dbReference type="DrugBank" id="DB05254">
    <property type="generic name" value="Fibrinolysin"/>
</dbReference>
<dbReference type="DrugBank" id="DB03782">
    <property type="generic name" value="N-(1-adamantyl)-N'-(4-guanidinobenzyl)urea"/>
</dbReference>
<dbReference type="DrugBank" id="DB06857">
    <property type="generic name" value="N-(4-CARBAMIMIDOYL-3-CHORO-PHENYL)-2-HYDROXY-3-IODO-5-METHYL-BENZAMIDE"/>
</dbReference>
<dbReference type="DrugBank" id="DB08324">
    <property type="generic name" value="N-3-OXO-DODECANOYL-L-HOMOSERINE LACTONE"/>
</dbReference>
<dbReference type="DrugBank" id="DB16701">
    <property type="generic name" value="Plasminogen"/>
</dbReference>
<dbReference type="DrugBank" id="DB03876">
    <property type="generic name" value="Thieno[2,3-B]Pyridine-2-Carboxamidine"/>
</dbReference>
<dbReference type="DrugBank" id="DB03476">
    <property type="generic name" value="Trans-6-(2-Phenylcyclopropyl)-Naphthalene-2-Carboxamidine"/>
</dbReference>
<dbReference type="DrugBank" id="DB13052">
    <property type="generic name" value="Upamostat"/>
</dbReference>
<dbReference type="DrugCentral" id="P00749"/>
<dbReference type="GuidetoPHARMACOLOGY" id="2393"/>
<dbReference type="MEROPS" id="S01.231"/>
<dbReference type="GlyConnect" id="612">
    <property type="glycosylation" value="2 N-Linked glycans (1 site), 1 O-Fuc glycan (1 site)"/>
</dbReference>
<dbReference type="GlyConnect" id="86">
    <property type="glycosylation" value="16 N-Linked glycans (1 site)"/>
</dbReference>
<dbReference type="GlyCosmos" id="P00749">
    <property type="glycosylation" value="3 sites, 31 glycans"/>
</dbReference>
<dbReference type="GlyGen" id="P00749">
    <property type="glycosylation" value="5 sites, 16 N-linked glycans (2 sites), 2 O-linked glycans (2 sites)"/>
</dbReference>
<dbReference type="iPTMnet" id="P00749"/>
<dbReference type="PhosphoSitePlus" id="P00749"/>
<dbReference type="SwissPalm" id="P00749"/>
<dbReference type="BioMuta" id="PLAU"/>
<dbReference type="DMDM" id="254763341"/>
<dbReference type="jPOST" id="P00749"/>
<dbReference type="MassIVE" id="P00749"/>
<dbReference type="PaxDb" id="9606-ENSP00000361850"/>
<dbReference type="PeptideAtlas" id="P00749"/>
<dbReference type="ProteomicsDB" id="51279">
    <molecule id="P00749-1"/>
</dbReference>
<dbReference type="ProteomicsDB" id="51280">
    <molecule id="P00749-2"/>
</dbReference>
<dbReference type="ABCD" id="P00749">
    <property type="antibodies" value="2 sequenced antibodies"/>
</dbReference>
<dbReference type="Antibodypedia" id="1899">
    <property type="antibodies" value="1078 antibodies from 44 providers"/>
</dbReference>
<dbReference type="DNASU" id="5328"/>
<dbReference type="Ensembl" id="ENST00000372764.4">
    <molecule id="P00749-1"/>
    <property type="protein sequence ID" value="ENSP00000361850.3"/>
    <property type="gene ID" value="ENSG00000122861.16"/>
</dbReference>
<dbReference type="Ensembl" id="ENST00000446342.5">
    <molecule id="P00749-2"/>
    <property type="protein sequence ID" value="ENSP00000388474.1"/>
    <property type="gene ID" value="ENSG00000122861.16"/>
</dbReference>
<dbReference type="GeneID" id="5328"/>
<dbReference type="KEGG" id="hsa:5328"/>
<dbReference type="MANE-Select" id="ENST00000372764.4">
    <property type="protein sequence ID" value="ENSP00000361850.3"/>
    <property type="RefSeq nucleotide sequence ID" value="NM_002658.6"/>
    <property type="RefSeq protein sequence ID" value="NP_002649.2"/>
</dbReference>
<dbReference type="UCSC" id="uc001jwa.4">
    <molecule id="P00749-1"/>
    <property type="organism name" value="human"/>
</dbReference>
<dbReference type="AGR" id="HGNC:9052"/>
<dbReference type="CTD" id="5328"/>
<dbReference type="DisGeNET" id="5328"/>
<dbReference type="GeneCards" id="PLAU"/>
<dbReference type="HGNC" id="HGNC:9052">
    <property type="gene designation" value="PLAU"/>
</dbReference>
<dbReference type="HPA" id="ENSG00000122861">
    <property type="expression patterns" value="Tissue enhanced (kidney, urinary bladder)"/>
</dbReference>
<dbReference type="MalaCards" id="PLAU"/>
<dbReference type="MIM" id="191840">
    <property type="type" value="gene"/>
</dbReference>
<dbReference type="MIM" id="601709">
    <property type="type" value="phenotype"/>
</dbReference>
<dbReference type="neXtProt" id="NX_P00749"/>
<dbReference type="OpenTargets" id="ENSG00000122861"/>
<dbReference type="Orphanet" id="220436">
    <property type="disease" value="Quebec platelet disorder"/>
</dbReference>
<dbReference type="PharmGKB" id="PA33382"/>
<dbReference type="VEuPathDB" id="HostDB:ENSG00000122861"/>
<dbReference type="eggNOG" id="ENOG502QRMI">
    <property type="taxonomic scope" value="Eukaryota"/>
</dbReference>
<dbReference type="GeneTree" id="ENSGT01050000244971"/>
<dbReference type="InParanoid" id="P00749"/>
<dbReference type="OMA" id="WPWCYVQ"/>
<dbReference type="OrthoDB" id="9406323at2759"/>
<dbReference type="PAN-GO" id="P00749">
    <property type="GO annotations" value="5 GO annotations based on evolutionary models"/>
</dbReference>
<dbReference type="PhylomeDB" id="P00749"/>
<dbReference type="TreeFam" id="TF329901"/>
<dbReference type="BRENDA" id="3.4.21.73">
    <property type="organism ID" value="2681"/>
</dbReference>
<dbReference type="PathwayCommons" id="P00749"/>
<dbReference type="Reactome" id="R-HSA-6798695">
    <property type="pathway name" value="Neutrophil degranulation"/>
</dbReference>
<dbReference type="Reactome" id="R-HSA-75205">
    <property type="pathway name" value="Dissolution of Fibrin Clot"/>
</dbReference>
<dbReference type="SABIO-RK" id="P00749"/>
<dbReference type="SignaLink" id="P00749"/>
<dbReference type="SIGNOR" id="P00749"/>
<dbReference type="BioGRID-ORCS" id="5328">
    <property type="hits" value="15 hits in 1171 CRISPR screens"/>
</dbReference>
<dbReference type="ChiTaRS" id="PLAU">
    <property type="organism name" value="human"/>
</dbReference>
<dbReference type="EvolutionaryTrace" id="P00749"/>
<dbReference type="GeneWiki" id="PLAU"/>
<dbReference type="GenomeRNAi" id="5328"/>
<dbReference type="Pharos" id="P00749">
    <property type="development level" value="Tchem"/>
</dbReference>
<dbReference type="PRO" id="PR:P00749"/>
<dbReference type="Proteomes" id="UP000005640">
    <property type="component" value="Chromosome 10"/>
</dbReference>
<dbReference type="RNAct" id="P00749">
    <property type="molecule type" value="protein"/>
</dbReference>
<dbReference type="Bgee" id="ENSG00000122861">
    <property type="expression patterns" value="Expressed in renal medulla and 165 other cell types or tissues"/>
</dbReference>
<dbReference type="ExpressionAtlas" id="P00749">
    <property type="expression patterns" value="baseline and differential"/>
</dbReference>
<dbReference type="GO" id="GO:0009986">
    <property type="term" value="C:cell surface"/>
    <property type="evidence" value="ECO:0000314"/>
    <property type="project" value="BHF-UCL"/>
</dbReference>
<dbReference type="GO" id="GO:0009897">
    <property type="term" value="C:external side of plasma membrane"/>
    <property type="evidence" value="ECO:0000303"/>
    <property type="project" value="ComplexPortal"/>
</dbReference>
<dbReference type="GO" id="GO:0070062">
    <property type="term" value="C:extracellular exosome"/>
    <property type="evidence" value="ECO:0007005"/>
    <property type="project" value="UniProtKB"/>
</dbReference>
<dbReference type="GO" id="GO:0005576">
    <property type="term" value="C:extracellular region"/>
    <property type="evidence" value="ECO:0000304"/>
    <property type="project" value="Reactome"/>
</dbReference>
<dbReference type="GO" id="GO:0005615">
    <property type="term" value="C:extracellular space"/>
    <property type="evidence" value="ECO:0000314"/>
    <property type="project" value="UniProtKB"/>
</dbReference>
<dbReference type="GO" id="GO:0005925">
    <property type="term" value="C:focal adhesion"/>
    <property type="evidence" value="ECO:0007005"/>
    <property type="project" value="UniProtKB"/>
</dbReference>
<dbReference type="GO" id="GO:0005886">
    <property type="term" value="C:plasma membrane"/>
    <property type="evidence" value="ECO:0000304"/>
    <property type="project" value="Reactome"/>
</dbReference>
<dbReference type="GO" id="GO:0098637">
    <property type="term" value="C:protein complex involved in cell-matrix adhesion"/>
    <property type="evidence" value="ECO:0000353"/>
    <property type="project" value="ComplexPortal"/>
</dbReference>
<dbReference type="GO" id="GO:0097180">
    <property type="term" value="C:serine protease inhibitor complex"/>
    <property type="evidence" value="ECO:0000353"/>
    <property type="project" value="ComplexPortal"/>
</dbReference>
<dbReference type="GO" id="GO:1905370">
    <property type="term" value="C:serine-type endopeptidase complex"/>
    <property type="evidence" value="ECO:0000353"/>
    <property type="project" value="ComplexPortal"/>
</dbReference>
<dbReference type="GO" id="GO:0035579">
    <property type="term" value="C:specific granule membrane"/>
    <property type="evidence" value="ECO:0000304"/>
    <property type="project" value="Reactome"/>
</dbReference>
<dbReference type="GO" id="GO:0070821">
    <property type="term" value="C:tertiary granule membrane"/>
    <property type="evidence" value="ECO:0000304"/>
    <property type="project" value="Reactome"/>
</dbReference>
<dbReference type="GO" id="GO:0004252">
    <property type="term" value="F:serine-type endopeptidase activity"/>
    <property type="evidence" value="ECO:0000318"/>
    <property type="project" value="GO_Central"/>
</dbReference>
<dbReference type="GO" id="GO:0007596">
    <property type="term" value="P:blood coagulation"/>
    <property type="evidence" value="ECO:0007669"/>
    <property type="project" value="UniProtKB-KW"/>
</dbReference>
<dbReference type="GO" id="GO:0006935">
    <property type="term" value="P:chemotaxis"/>
    <property type="evidence" value="ECO:0000304"/>
    <property type="project" value="ProtInc"/>
</dbReference>
<dbReference type="GO" id="GO:0042730">
    <property type="term" value="P:fibrinolysis"/>
    <property type="evidence" value="ECO:0000318"/>
    <property type="project" value="GO_Central"/>
</dbReference>
<dbReference type="GO" id="GO:0051918">
    <property type="term" value="P:negative regulation of fibrinolysis"/>
    <property type="evidence" value="ECO:0000303"/>
    <property type="project" value="ComplexPortal"/>
</dbReference>
<dbReference type="GO" id="GO:0010757">
    <property type="term" value="P:negative regulation of plasminogen activation"/>
    <property type="evidence" value="ECO:0000303"/>
    <property type="project" value="ComplexPortal"/>
</dbReference>
<dbReference type="GO" id="GO:0031639">
    <property type="term" value="P:plasminogen activation"/>
    <property type="evidence" value="ECO:0000314"/>
    <property type="project" value="AgBase"/>
</dbReference>
<dbReference type="GO" id="GO:0030335">
    <property type="term" value="P:positive regulation of cell migration"/>
    <property type="evidence" value="ECO:0000314"/>
    <property type="project" value="MGI"/>
</dbReference>
<dbReference type="GO" id="GO:0006508">
    <property type="term" value="P:proteolysis"/>
    <property type="evidence" value="ECO:0000304"/>
    <property type="project" value="ProtInc"/>
</dbReference>
<dbReference type="GO" id="GO:0030155">
    <property type="term" value="P:regulation of cell adhesion"/>
    <property type="evidence" value="ECO:0000314"/>
    <property type="project" value="ComplexPortal"/>
</dbReference>
<dbReference type="GO" id="GO:0033628">
    <property type="term" value="P:regulation of cell adhesion mediated by integrin"/>
    <property type="evidence" value="ECO:0000314"/>
    <property type="project" value="BHF-UCL"/>
</dbReference>
<dbReference type="GO" id="GO:0042127">
    <property type="term" value="P:regulation of cell population proliferation"/>
    <property type="evidence" value="ECO:0007669"/>
    <property type="project" value="Ensembl"/>
</dbReference>
<dbReference type="GO" id="GO:0051917">
    <property type="term" value="P:regulation of fibrinolysis"/>
    <property type="evidence" value="ECO:0000303"/>
    <property type="project" value="ComplexPortal"/>
</dbReference>
<dbReference type="GO" id="GO:0010755">
    <property type="term" value="P:regulation of plasminogen activation"/>
    <property type="evidence" value="ECO:0000303"/>
    <property type="project" value="ComplexPortal"/>
</dbReference>
<dbReference type="GO" id="GO:0010469">
    <property type="term" value="P:regulation of signaling receptor activity"/>
    <property type="evidence" value="ECO:0000314"/>
    <property type="project" value="BHF-UCL"/>
</dbReference>
<dbReference type="GO" id="GO:0014910">
    <property type="term" value="P:regulation of smooth muscle cell migration"/>
    <property type="evidence" value="ECO:0000314"/>
    <property type="project" value="BHF-UCL"/>
</dbReference>
<dbReference type="GO" id="GO:2000097">
    <property type="term" value="P:regulation of smooth muscle cell-matrix adhesion"/>
    <property type="evidence" value="ECO:0000314"/>
    <property type="project" value="BHF-UCL"/>
</dbReference>
<dbReference type="GO" id="GO:0061041">
    <property type="term" value="P:regulation of wound healing"/>
    <property type="evidence" value="ECO:0000305"/>
    <property type="project" value="BHF-UCL"/>
</dbReference>
<dbReference type="GO" id="GO:0001666">
    <property type="term" value="P:response to hypoxia"/>
    <property type="evidence" value="ECO:0007669"/>
    <property type="project" value="Ensembl"/>
</dbReference>
<dbReference type="GO" id="GO:0007165">
    <property type="term" value="P:signal transduction"/>
    <property type="evidence" value="ECO:0000304"/>
    <property type="project" value="ProtInc"/>
</dbReference>
<dbReference type="GO" id="GO:0014909">
    <property type="term" value="P:smooth muscle cell migration"/>
    <property type="evidence" value="ECO:0007669"/>
    <property type="project" value="Ensembl"/>
</dbReference>
<dbReference type="GO" id="GO:0038195">
    <property type="term" value="P:urokinase plasminogen activator signaling pathway"/>
    <property type="evidence" value="ECO:0000303"/>
    <property type="project" value="ComplexPortal"/>
</dbReference>
<dbReference type="CDD" id="cd00108">
    <property type="entry name" value="KR"/>
    <property type="match status" value="1"/>
</dbReference>
<dbReference type="CDD" id="cd00190">
    <property type="entry name" value="Tryp_SPc"/>
    <property type="match status" value="1"/>
</dbReference>
<dbReference type="FunFam" id="2.40.10.10:FF:000068">
    <property type="entry name" value="transmembrane protease serine 2"/>
    <property type="match status" value="1"/>
</dbReference>
<dbReference type="FunFam" id="2.10.25.10:FF:000266">
    <property type="entry name" value="Urokinase-type plasminogen activator"/>
    <property type="match status" value="1"/>
</dbReference>
<dbReference type="FunFam" id="2.40.10.10:FF:000065">
    <property type="entry name" value="Urokinase-type plasminogen activator"/>
    <property type="match status" value="1"/>
</dbReference>
<dbReference type="FunFam" id="2.40.20.10:FF:000001">
    <property type="entry name" value="Urokinase-type plasminogen activator"/>
    <property type="match status" value="1"/>
</dbReference>
<dbReference type="Gene3D" id="2.10.25.10">
    <property type="entry name" value="Laminin"/>
    <property type="match status" value="1"/>
</dbReference>
<dbReference type="Gene3D" id="2.40.20.10">
    <property type="entry name" value="Plasminogen Kringle 4"/>
    <property type="match status" value="1"/>
</dbReference>
<dbReference type="Gene3D" id="2.40.10.10">
    <property type="entry name" value="Trypsin-like serine proteases"/>
    <property type="match status" value="2"/>
</dbReference>
<dbReference type="InterPro" id="IPR000742">
    <property type="entry name" value="EGF-like_dom"/>
</dbReference>
<dbReference type="InterPro" id="IPR000001">
    <property type="entry name" value="Kringle"/>
</dbReference>
<dbReference type="InterPro" id="IPR013806">
    <property type="entry name" value="Kringle-like"/>
</dbReference>
<dbReference type="InterPro" id="IPR018056">
    <property type="entry name" value="Kringle_CS"/>
</dbReference>
<dbReference type="InterPro" id="IPR038178">
    <property type="entry name" value="Kringle_sf"/>
</dbReference>
<dbReference type="InterPro" id="IPR009003">
    <property type="entry name" value="Peptidase_S1_PA"/>
</dbReference>
<dbReference type="InterPro" id="IPR043504">
    <property type="entry name" value="Peptidase_S1_PA_chymotrypsin"/>
</dbReference>
<dbReference type="InterPro" id="IPR001314">
    <property type="entry name" value="Peptidase_S1A"/>
</dbReference>
<dbReference type="InterPro" id="IPR050127">
    <property type="entry name" value="Serine_Proteases_S1"/>
</dbReference>
<dbReference type="InterPro" id="IPR001254">
    <property type="entry name" value="Trypsin_dom"/>
</dbReference>
<dbReference type="InterPro" id="IPR018114">
    <property type="entry name" value="TRYPSIN_HIS"/>
</dbReference>
<dbReference type="InterPro" id="IPR033116">
    <property type="entry name" value="TRYPSIN_SER"/>
</dbReference>
<dbReference type="PANTHER" id="PTHR24264">
    <property type="entry name" value="TRYPSIN-RELATED"/>
    <property type="match status" value="1"/>
</dbReference>
<dbReference type="PANTHER" id="PTHR24264:SF38">
    <property type="entry name" value="UROKINASE-TYPE PLASMINOGEN ACTIVATOR"/>
    <property type="match status" value="1"/>
</dbReference>
<dbReference type="Pfam" id="PF00051">
    <property type="entry name" value="Kringle"/>
    <property type="match status" value="1"/>
</dbReference>
<dbReference type="Pfam" id="PF00089">
    <property type="entry name" value="Trypsin"/>
    <property type="match status" value="1"/>
</dbReference>
<dbReference type="PRINTS" id="PR00722">
    <property type="entry name" value="CHYMOTRYPSIN"/>
</dbReference>
<dbReference type="PRINTS" id="PR00018">
    <property type="entry name" value="KRINGLE"/>
</dbReference>
<dbReference type="SMART" id="SM00130">
    <property type="entry name" value="KR"/>
    <property type="match status" value="1"/>
</dbReference>
<dbReference type="SMART" id="SM00020">
    <property type="entry name" value="Tryp_SPc"/>
    <property type="match status" value="1"/>
</dbReference>
<dbReference type="SUPFAM" id="SSF57440">
    <property type="entry name" value="Kringle-like"/>
    <property type="match status" value="1"/>
</dbReference>
<dbReference type="SUPFAM" id="SSF50494">
    <property type="entry name" value="Trypsin-like serine proteases"/>
    <property type="match status" value="1"/>
</dbReference>
<dbReference type="PROSITE" id="PS00022">
    <property type="entry name" value="EGF_1"/>
    <property type="match status" value="1"/>
</dbReference>
<dbReference type="PROSITE" id="PS50026">
    <property type="entry name" value="EGF_3"/>
    <property type="match status" value="1"/>
</dbReference>
<dbReference type="PROSITE" id="PS00021">
    <property type="entry name" value="KRINGLE_1"/>
    <property type="match status" value="1"/>
</dbReference>
<dbReference type="PROSITE" id="PS50070">
    <property type="entry name" value="KRINGLE_2"/>
    <property type="match status" value="1"/>
</dbReference>
<dbReference type="PROSITE" id="PS50240">
    <property type="entry name" value="TRYPSIN_DOM"/>
    <property type="match status" value="1"/>
</dbReference>
<dbReference type="PROSITE" id="PS00134">
    <property type="entry name" value="TRYPSIN_HIS"/>
    <property type="match status" value="1"/>
</dbReference>
<dbReference type="PROSITE" id="PS00135">
    <property type="entry name" value="TRYPSIN_SER"/>
    <property type="match status" value="1"/>
</dbReference>
<protein>
    <recommendedName>
        <fullName>Urokinase-type plasminogen activator</fullName>
        <shortName>U-plasminogen activator</shortName>
        <shortName evidence="32">uPA</shortName>
        <ecNumber>3.4.21.73</ecNumber>
    </recommendedName>
    <component>
        <recommendedName>
            <fullName evidence="33">Urokinase-type plasminogen activator long chain A</fullName>
        </recommendedName>
    </component>
    <component>
        <recommendedName>
            <fullName>Urokinase-type plasminogen activator short chain A</fullName>
        </recommendedName>
    </component>
    <component>
        <recommendedName>
            <fullName>Urokinase-type plasminogen activator chain B</fullName>
        </recommendedName>
    </component>
</protein>
<evidence type="ECO:0000250" key="1"/>
<evidence type="ECO:0000255" key="2">
    <source>
        <dbReference type="PROSITE-ProRule" id="PRU00076"/>
    </source>
</evidence>
<evidence type="ECO:0000255" key="3">
    <source>
        <dbReference type="PROSITE-ProRule" id="PRU00121"/>
    </source>
</evidence>
<evidence type="ECO:0000255" key="4">
    <source>
        <dbReference type="PROSITE-ProRule" id="PRU00274"/>
    </source>
</evidence>
<evidence type="ECO:0000269" key="5">
    <source>
    </source>
</evidence>
<evidence type="ECO:0000269" key="6">
    <source>
    </source>
</evidence>
<evidence type="ECO:0000269" key="7">
    <source>
    </source>
</evidence>
<evidence type="ECO:0000269" key="8">
    <source>
    </source>
</evidence>
<evidence type="ECO:0000269" key="9">
    <source>
    </source>
</evidence>
<evidence type="ECO:0000269" key="10">
    <source>
    </source>
</evidence>
<evidence type="ECO:0000269" key="11">
    <source>
    </source>
</evidence>
<evidence type="ECO:0000269" key="12">
    <source>
    </source>
</evidence>
<evidence type="ECO:0000269" key="13">
    <source>
    </source>
</evidence>
<evidence type="ECO:0000269" key="14">
    <source>
    </source>
</evidence>
<evidence type="ECO:0000269" key="15">
    <source>
    </source>
</evidence>
<evidence type="ECO:0000269" key="16">
    <source>
    </source>
</evidence>
<evidence type="ECO:0000269" key="17">
    <source>
    </source>
</evidence>
<evidence type="ECO:0000269" key="18">
    <source>
    </source>
</evidence>
<evidence type="ECO:0000269" key="19">
    <source>
    </source>
</evidence>
<evidence type="ECO:0000269" key="20">
    <source>
    </source>
</evidence>
<evidence type="ECO:0000269" key="21">
    <source>
    </source>
</evidence>
<evidence type="ECO:0000269" key="22">
    <source>
    </source>
</evidence>
<evidence type="ECO:0000269" key="23">
    <source>
    </source>
</evidence>
<evidence type="ECO:0000269" key="24">
    <source>
    </source>
</evidence>
<evidence type="ECO:0000269" key="25">
    <source>
    </source>
</evidence>
<evidence type="ECO:0000269" key="26">
    <source>
    </source>
</evidence>
<evidence type="ECO:0000269" key="27">
    <source ref="1"/>
</evidence>
<evidence type="ECO:0000269" key="28">
    <source ref="5"/>
</evidence>
<evidence type="ECO:0000269" key="29">
    <source ref="7"/>
</evidence>
<evidence type="ECO:0000269" key="30">
    <source ref="9"/>
</evidence>
<evidence type="ECO:0000303" key="31">
    <source>
    </source>
</evidence>
<evidence type="ECO:0000303" key="32">
    <source>
    </source>
</evidence>
<evidence type="ECO:0000305" key="33"/>
<evidence type="ECO:0000312" key="34">
    <source>
        <dbReference type="HGNC" id="HGNC:9052"/>
    </source>
</evidence>
<evidence type="ECO:0007829" key="35">
    <source>
        <dbReference type="PDB" id="1GJA"/>
    </source>
</evidence>
<evidence type="ECO:0007829" key="36">
    <source>
        <dbReference type="PDB" id="1KDU"/>
    </source>
</evidence>
<evidence type="ECO:0007829" key="37">
    <source>
        <dbReference type="PDB" id="1LMW"/>
    </source>
</evidence>
<evidence type="ECO:0007829" key="38">
    <source>
        <dbReference type="PDB" id="1URK"/>
    </source>
</evidence>
<evidence type="ECO:0007829" key="39">
    <source>
        <dbReference type="PDB" id="2FD6"/>
    </source>
</evidence>
<evidence type="ECO:0007829" key="40">
    <source>
        <dbReference type="PDB" id="2I9A"/>
    </source>
</evidence>
<evidence type="ECO:0007829" key="41">
    <source>
        <dbReference type="PDB" id="2I9B"/>
    </source>
</evidence>
<evidence type="ECO:0007829" key="42">
    <source>
        <dbReference type="PDB" id="3BT1"/>
    </source>
</evidence>
<evidence type="ECO:0007829" key="43">
    <source>
        <dbReference type="PDB" id="3KHV"/>
    </source>
</evidence>
<evidence type="ECO:0007829" key="44">
    <source>
        <dbReference type="PDB" id="3U73"/>
    </source>
</evidence>
<evidence type="ECO:0007829" key="45">
    <source>
        <dbReference type="PDB" id="4DW2"/>
    </source>
</evidence>
<evidence type="ECO:0007829" key="46">
    <source>
        <dbReference type="PDB" id="4XSK"/>
    </source>
</evidence>
<evidence type="ECO:0007829" key="47">
    <source>
        <dbReference type="PDB" id="5HGG"/>
    </source>
</evidence>
<evidence type="ECO:0007829" key="48">
    <source>
        <dbReference type="PDB" id="5YC6"/>
    </source>
</evidence>
<gene>
    <name evidence="34" type="primary">PLAU</name>
</gene>
<reference key="1">
    <citation type="journal article" date="1985" name="Biotechnology (N.Y.)">
        <title>Cloning and expression of the gene for pro-urokinase in Escherichia coli.</title>
        <authorList>
            <person name="Holmes W.E."/>
            <person name="Pennica D."/>
            <person name="Blaber M."/>
            <person name="Rey M.W."/>
            <person name="Guenzler W.A."/>
            <person name="Steffens G.J."/>
            <person name="Heyneker H.L."/>
        </authorList>
    </citation>
    <scope>NUCLEOTIDE SEQUENCE [MRNA] (ISOFORM 1)</scope>
    <scope>VARIANT PRO-141</scope>
</reference>
<reference key="2">
    <citation type="journal article" date="1985" name="DNA">
        <title>Molecular cloning, sequencing, and expression in Escherichia coli of human preprourokinase cDNA.</title>
        <authorList>
            <person name="Jacobs P."/>
            <person name="Cravador A."/>
            <person name="Loriau R."/>
            <person name="Brockly F."/>
            <person name="Colau B."/>
            <person name="Chuchana P."/>
            <person name="van Elsen A."/>
            <person name="Herzog A."/>
            <person name="Bollen A."/>
        </authorList>
    </citation>
    <scope>NUCLEOTIDE SEQUENCE [MRNA] (ISOFORM 1)</scope>
    <scope>VARIANT PRO-141</scope>
</reference>
<reference key="3">
    <citation type="journal article" date="1985" name="Gene">
        <title>Molecular cloning of cDNA coding for human preprourokinase.</title>
        <authorList>
            <person name="Nagai M."/>
            <person name="Hiramatsu R."/>
            <person name="Kaneda T."/>
            <person name="Hayasuke N."/>
            <person name="Arimura H."/>
            <person name="Nishida M."/>
            <person name="Suyama T."/>
        </authorList>
    </citation>
    <scope>NUCLEOTIDE SEQUENCE [MRNA] (ISOFORM 1)</scope>
    <scope>VARIANT PRO-141</scope>
</reference>
<reference key="4">
    <citation type="journal article" date="1985" name="Nucleic Acids Res.">
        <title>The human urokinase-plasminogen activator gene and its promoter.</title>
        <authorList>
            <person name="Riccio A."/>
            <person name="Grimaldi G."/>
            <person name="Verde P."/>
            <person name="Sebastio G."/>
            <person name="Boast S."/>
            <person name="Blasi F."/>
        </authorList>
    </citation>
    <scope>NUCLEOTIDE SEQUENCE [GENOMIC DNA]</scope>
    <scope>VARIANTS PRO-141 AND MET-214</scope>
</reference>
<reference key="5">
    <citation type="submission" date="2003-05" db="EMBL/GenBank/DDBJ databases">
        <title>Cloning of human full-length CDSs in BD Creator(TM) System Donor vector.</title>
        <authorList>
            <person name="Kalnine N."/>
            <person name="Chen X."/>
            <person name="Rolfs A."/>
            <person name="Halleck A."/>
            <person name="Hines L."/>
            <person name="Eisenstein S."/>
            <person name="Koundinya M."/>
            <person name="Raphael J."/>
            <person name="Moreira D."/>
            <person name="Kelley T."/>
            <person name="LaBaer J."/>
            <person name="Lin Y."/>
            <person name="Phelan M."/>
            <person name="Farmer A."/>
        </authorList>
    </citation>
    <scope>NUCLEOTIDE SEQUENCE [LARGE SCALE MRNA] (ISOFORM 1)</scope>
    <scope>VARIANT PRO-141</scope>
</reference>
<reference key="6">
    <citation type="journal article" date="2004" name="Nat. Genet.">
        <title>Complete sequencing and characterization of 21,243 full-length human cDNAs.</title>
        <authorList>
            <person name="Ota T."/>
            <person name="Suzuki Y."/>
            <person name="Nishikawa T."/>
            <person name="Otsuki T."/>
            <person name="Sugiyama T."/>
            <person name="Irie R."/>
            <person name="Wakamatsu A."/>
            <person name="Hayashi K."/>
            <person name="Sato H."/>
            <person name="Nagai K."/>
            <person name="Kimura K."/>
            <person name="Makita H."/>
            <person name="Sekine M."/>
            <person name="Obayashi M."/>
            <person name="Nishi T."/>
            <person name="Shibahara T."/>
            <person name="Tanaka T."/>
            <person name="Ishii S."/>
            <person name="Yamamoto J."/>
            <person name="Saito K."/>
            <person name="Kawai Y."/>
            <person name="Isono Y."/>
            <person name="Nakamura Y."/>
            <person name="Nagahari K."/>
            <person name="Murakami K."/>
            <person name="Yasuda T."/>
            <person name="Iwayanagi T."/>
            <person name="Wagatsuma M."/>
            <person name="Shiratori A."/>
            <person name="Sudo H."/>
            <person name="Hosoiri T."/>
            <person name="Kaku Y."/>
            <person name="Kodaira H."/>
            <person name="Kondo H."/>
            <person name="Sugawara M."/>
            <person name="Takahashi M."/>
            <person name="Kanda K."/>
            <person name="Yokoi T."/>
            <person name="Furuya T."/>
            <person name="Kikkawa E."/>
            <person name="Omura Y."/>
            <person name="Abe K."/>
            <person name="Kamihara K."/>
            <person name="Katsuta N."/>
            <person name="Sato K."/>
            <person name="Tanikawa M."/>
            <person name="Yamazaki M."/>
            <person name="Ninomiya K."/>
            <person name="Ishibashi T."/>
            <person name="Yamashita H."/>
            <person name="Murakawa K."/>
            <person name="Fujimori K."/>
            <person name="Tanai H."/>
            <person name="Kimata M."/>
            <person name="Watanabe M."/>
            <person name="Hiraoka S."/>
            <person name="Chiba Y."/>
            <person name="Ishida S."/>
            <person name="Ono Y."/>
            <person name="Takiguchi S."/>
            <person name="Watanabe S."/>
            <person name="Yosida M."/>
            <person name="Hotuta T."/>
            <person name="Kusano J."/>
            <person name="Kanehori K."/>
            <person name="Takahashi-Fujii A."/>
            <person name="Hara H."/>
            <person name="Tanase T.-O."/>
            <person name="Nomura Y."/>
            <person name="Togiya S."/>
            <person name="Komai F."/>
            <person name="Hara R."/>
            <person name="Takeuchi K."/>
            <person name="Arita M."/>
            <person name="Imose N."/>
            <person name="Musashino K."/>
            <person name="Yuuki H."/>
            <person name="Oshima A."/>
            <person name="Sasaki N."/>
            <person name="Aotsuka S."/>
            <person name="Yoshikawa Y."/>
            <person name="Matsunawa H."/>
            <person name="Ichihara T."/>
            <person name="Shiohata N."/>
            <person name="Sano S."/>
            <person name="Moriya S."/>
            <person name="Momiyama H."/>
            <person name="Satoh N."/>
            <person name="Takami S."/>
            <person name="Terashima Y."/>
            <person name="Suzuki O."/>
            <person name="Nakagawa S."/>
            <person name="Senoh A."/>
            <person name="Mizoguchi H."/>
            <person name="Goto Y."/>
            <person name="Shimizu F."/>
            <person name="Wakebe H."/>
            <person name="Hishigaki H."/>
            <person name="Watanabe T."/>
            <person name="Sugiyama A."/>
            <person name="Takemoto M."/>
            <person name="Kawakami B."/>
            <person name="Yamazaki M."/>
            <person name="Watanabe K."/>
            <person name="Kumagai A."/>
            <person name="Itakura S."/>
            <person name="Fukuzumi Y."/>
            <person name="Fujimori Y."/>
            <person name="Komiyama M."/>
            <person name="Tashiro H."/>
            <person name="Tanigami A."/>
            <person name="Fujiwara T."/>
            <person name="Ono T."/>
            <person name="Yamada K."/>
            <person name="Fujii Y."/>
            <person name="Ozaki K."/>
            <person name="Hirao M."/>
            <person name="Ohmori Y."/>
            <person name="Kawabata A."/>
            <person name="Hikiji T."/>
            <person name="Kobatake N."/>
            <person name="Inagaki H."/>
            <person name="Ikema Y."/>
            <person name="Okamoto S."/>
            <person name="Okitani R."/>
            <person name="Kawakami T."/>
            <person name="Noguchi S."/>
            <person name="Itoh T."/>
            <person name="Shigeta K."/>
            <person name="Senba T."/>
            <person name="Matsumura K."/>
            <person name="Nakajima Y."/>
            <person name="Mizuno T."/>
            <person name="Morinaga M."/>
            <person name="Sasaki M."/>
            <person name="Togashi T."/>
            <person name="Oyama M."/>
            <person name="Hata H."/>
            <person name="Watanabe M."/>
            <person name="Komatsu T."/>
            <person name="Mizushima-Sugano J."/>
            <person name="Satoh T."/>
            <person name="Shirai Y."/>
            <person name="Takahashi Y."/>
            <person name="Nakagawa K."/>
            <person name="Okumura K."/>
            <person name="Nagase T."/>
            <person name="Nomura N."/>
            <person name="Kikuchi H."/>
            <person name="Masuho Y."/>
            <person name="Yamashita R."/>
            <person name="Nakai K."/>
            <person name="Yada T."/>
            <person name="Nakamura Y."/>
            <person name="Ohara O."/>
            <person name="Isogai T."/>
            <person name="Sugano S."/>
        </authorList>
    </citation>
    <scope>NUCLEOTIDE SEQUENCE [LARGE SCALE MRNA] (ISOFORM 2)</scope>
    <scope>VARIANT PRO-141</scope>
    <source>
        <tissue>Mesangial cell</tissue>
    </source>
</reference>
<reference key="7">
    <citation type="submission" date="2001-06" db="EMBL/GenBank/DDBJ databases">
        <authorList>
            <consortium name="SeattleSNPs variation discovery resource"/>
        </authorList>
    </citation>
    <scope>NUCLEOTIDE SEQUENCE [GENOMIC DNA]</scope>
    <scope>VARIANTS LEU-15; PRO-141 AND GLN-231</scope>
</reference>
<reference key="8">
    <citation type="journal article" date="2004" name="Nature">
        <title>The DNA sequence and comparative analysis of human chromosome 10.</title>
        <authorList>
            <person name="Deloukas P."/>
            <person name="Earthrowl M.E."/>
            <person name="Grafham D.V."/>
            <person name="Rubenfield M."/>
            <person name="French L."/>
            <person name="Steward C.A."/>
            <person name="Sims S.K."/>
            <person name="Jones M.C."/>
            <person name="Searle S."/>
            <person name="Scott C."/>
            <person name="Howe K."/>
            <person name="Hunt S.E."/>
            <person name="Andrews T.D."/>
            <person name="Gilbert J.G.R."/>
            <person name="Swarbreck D."/>
            <person name="Ashurst J.L."/>
            <person name="Taylor A."/>
            <person name="Battles J."/>
            <person name="Bird C.P."/>
            <person name="Ainscough R."/>
            <person name="Almeida J.P."/>
            <person name="Ashwell R.I.S."/>
            <person name="Ambrose K.D."/>
            <person name="Babbage A.K."/>
            <person name="Bagguley C.L."/>
            <person name="Bailey J."/>
            <person name="Banerjee R."/>
            <person name="Bates K."/>
            <person name="Beasley H."/>
            <person name="Bray-Allen S."/>
            <person name="Brown A.J."/>
            <person name="Brown J.Y."/>
            <person name="Burford D.C."/>
            <person name="Burrill W."/>
            <person name="Burton J."/>
            <person name="Cahill P."/>
            <person name="Camire D."/>
            <person name="Carter N.P."/>
            <person name="Chapman J.C."/>
            <person name="Clark S.Y."/>
            <person name="Clarke G."/>
            <person name="Clee C.M."/>
            <person name="Clegg S."/>
            <person name="Corby N."/>
            <person name="Coulson A."/>
            <person name="Dhami P."/>
            <person name="Dutta I."/>
            <person name="Dunn M."/>
            <person name="Faulkner L."/>
            <person name="Frankish A."/>
            <person name="Frankland J.A."/>
            <person name="Garner P."/>
            <person name="Garnett J."/>
            <person name="Gribble S."/>
            <person name="Griffiths C."/>
            <person name="Grocock R."/>
            <person name="Gustafson E."/>
            <person name="Hammond S."/>
            <person name="Harley J.L."/>
            <person name="Hart E."/>
            <person name="Heath P.D."/>
            <person name="Ho T.P."/>
            <person name="Hopkins B."/>
            <person name="Horne J."/>
            <person name="Howden P.J."/>
            <person name="Huckle E."/>
            <person name="Hynds C."/>
            <person name="Johnson C."/>
            <person name="Johnson D."/>
            <person name="Kana A."/>
            <person name="Kay M."/>
            <person name="Kimberley A.M."/>
            <person name="Kershaw J.K."/>
            <person name="Kokkinaki M."/>
            <person name="Laird G.K."/>
            <person name="Lawlor S."/>
            <person name="Lee H.M."/>
            <person name="Leongamornlert D.A."/>
            <person name="Laird G."/>
            <person name="Lloyd C."/>
            <person name="Lloyd D.M."/>
            <person name="Loveland J."/>
            <person name="Lovell J."/>
            <person name="McLaren S."/>
            <person name="McLay K.E."/>
            <person name="McMurray A."/>
            <person name="Mashreghi-Mohammadi M."/>
            <person name="Matthews L."/>
            <person name="Milne S."/>
            <person name="Nickerson T."/>
            <person name="Nguyen M."/>
            <person name="Overton-Larty E."/>
            <person name="Palmer S.A."/>
            <person name="Pearce A.V."/>
            <person name="Peck A.I."/>
            <person name="Pelan S."/>
            <person name="Phillimore B."/>
            <person name="Porter K."/>
            <person name="Rice C.M."/>
            <person name="Rogosin A."/>
            <person name="Ross M.T."/>
            <person name="Sarafidou T."/>
            <person name="Sehra H.K."/>
            <person name="Shownkeen R."/>
            <person name="Skuce C.D."/>
            <person name="Smith M."/>
            <person name="Standring L."/>
            <person name="Sycamore N."/>
            <person name="Tester J."/>
            <person name="Thorpe A."/>
            <person name="Torcasso W."/>
            <person name="Tracey A."/>
            <person name="Tromans A."/>
            <person name="Tsolas J."/>
            <person name="Wall M."/>
            <person name="Walsh J."/>
            <person name="Wang H."/>
            <person name="Weinstock K."/>
            <person name="West A.P."/>
            <person name="Willey D.L."/>
            <person name="Whitehead S.L."/>
            <person name="Wilming L."/>
            <person name="Wray P.W."/>
            <person name="Young L."/>
            <person name="Chen Y."/>
            <person name="Lovering R.C."/>
            <person name="Moschonas N.K."/>
            <person name="Siebert R."/>
            <person name="Fechtel K."/>
            <person name="Bentley D."/>
            <person name="Durbin R.M."/>
            <person name="Hubbard T."/>
            <person name="Doucette-Stamm L."/>
            <person name="Beck S."/>
            <person name="Smith D.R."/>
            <person name="Rogers J."/>
        </authorList>
    </citation>
    <scope>NUCLEOTIDE SEQUENCE [LARGE SCALE GENOMIC DNA]</scope>
</reference>
<reference key="9">
    <citation type="submission" date="2005-07" db="EMBL/GenBank/DDBJ databases">
        <authorList>
            <person name="Mural R.J."/>
            <person name="Istrail S."/>
            <person name="Sutton G.G."/>
            <person name="Florea L."/>
            <person name="Halpern A.L."/>
            <person name="Mobarry C.M."/>
            <person name="Lippert R."/>
            <person name="Walenz B."/>
            <person name="Shatkay H."/>
            <person name="Dew I."/>
            <person name="Miller J.R."/>
            <person name="Flanigan M.J."/>
            <person name="Edwards N.J."/>
            <person name="Bolanos R."/>
            <person name="Fasulo D."/>
            <person name="Halldorsson B.V."/>
            <person name="Hannenhalli S."/>
            <person name="Turner R."/>
            <person name="Yooseph S."/>
            <person name="Lu F."/>
            <person name="Nusskern D.R."/>
            <person name="Shue B.C."/>
            <person name="Zheng X.H."/>
            <person name="Zhong F."/>
            <person name="Delcher A.L."/>
            <person name="Huson D.H."/>
            <person name="Kravitz S.A."/>
            <person name="Mouchard L."/>
            <person name="Reinert K."/>
            <person name="Remington K.A."/>
            <person name="Clark A.G."/>
            <person name="Waterman M.S."/>
            <person name="Eichler E.E."/>
            <person name="Adams M.D."/>
            <person name="Hunkapiller M.W."/>
            <person name="Myers E.W."/>
            <person name="Venter J.C."/>
        </authorList>
    </citation>
    <scope>NUCLEOTIDE SEQUENCE [LARGE SCALE GENOMIC DNA]</scope>
    <scope>VARIANT PRO-141</scope>
</reference>
<reference key="10">
    <citation type="journal article" date="2004" name="Genome Res.">
        <title>The status, quality, and expansion of the NIH full-length cDNA project: the Mammalian Gene Collection (MGC).</title>
        <authorList>
            <consortium name="The MGC Project Team"/>
        </authorList>
    </citation>
    <scope>NUCLEOTIDE SEQUENCE [LARGE SCALE MRNA] (ISOFORM 1)</scope>
    <scope>VARIANT PRO-141</scope>
    <source>
        <tissue>Lung</tissue>
    </source>
</reference>
<reference key="11">
    <citation type="journal article" date="1996" name="Biochim. Biophys. Acta">
        <title>Characterization of single chain urokinase-type plasminogen activator with a novel amino-acid substitution in the kringle structure.</title>
        <authorList>
            <person name="Yoshimoto M."/>
            <person name="Ushiyama Y."/>
            <person name="Sakai M."/>
            <person name="Tamaki S."/>
            <person name="Hara H."/>
            <person name="Takahashi K."/>
            <person name="Sawasaki Y."/>
            <person name="Hanada K."/>
        </authorList>
    </citation>
    <scope>NUCLEOTIDE SEQUENCE [MRNA] OF 21-431</scope>
</reference>
<reference key="12">
    <citation type="journal article" date="1991" name="Proc. Natl. Acad. Sci. U.S.A.">
        <title>Characterization of a posttranslational fucosylation in the growth factor domain of urinary plasminogen activator.</title>
        <authorList>
            <person name="Buko A.M."/>
            <person name="Kentzer E.J."/>
            <person name="Petros A."/>
            <person name="Menon G."/>
            <person name="Zuiderweg E.R."/>
            <person name="Sarin V.K."/>
        </authorList>
    </citation>
    <scope>PROTEIN SEQUENCE OF 21-43</scope>
    <scope>GLYCOSYLATION AT THR-38</scope>
    <scope>IDENTIFICATION BY MASS SPECTROMETRY</scope>
</reference>
<reference key="13">
    <citation type="journal article" date="1984" name="Proc. Natl. Acad. Sci. U.S.A.">
        <title>Identification and primary sequence of an unspliced human urokinase poly(A)+ RNA.</title>
        <authorList>
            <person name="Verde P."/>
            <person name="Stoppelli M.P."/>
            <person name="Galeffi P."/>
            <person name="di Nocera P."/>
            <person name="Blasi F."/>
        </authorList>
    </citation>
    <scope>NUCLEOTIDE SEQUENCE [GENOMIC DNA / MRNA] OF 66-431</scope>
    <scope>VARIANTS PRO-141 AND MET-214</scope>
</reference>
<reference key="14">
    <citation type="journal article" date="1982" name="Hoppe-Seyler's Z. Physiol. Chem.">
        <title>The primary structure of high molecular mass urokinase from human urine. The complete amino acid sequence of the A chain.</title>
        <authorList>
            <person name="Gunzler W.A."/>
            <person name="Steffens G.J."/>
            <person name="Otting F."/>
            <person name="Kim S.-M.A."/>
            <person name="Frankus E."/>
            <person name="Flohe L."/>
        </authorList>
    </citation>
    <scope>PROTEIN SEQUENCE OF 21-177</scope>
    <scope>VARIANT PRO-141</scope>
</reference>
<reference key="15">
    <citation type="journal article" date="1982" name="Eur. J. Biochem.">
        <title>Human low-molecular-weight urinary urokinase. Partial characterization and preliminary sequence data of the two polypeptide chains.</title>
        <authorList>
            <person name="Schaller J."/>
            <person name="Nick H."/>
            <person name="Rickli E.E."/>
            <person name="Gillessen D."/>
            <person name="Lergier W."/>
            <person name="Studer R.O."/>
        </authorList>
    </citation>
    <scope>PROTEIN SEQUENCE OF 156-176 AND 179-224</scope>
</reference>
<reference key="16">
    <citation type="journal article" date="1982" name="Hoppe-Seyler's Z. Physiol. Chem.">
        <title>The complete amino acid sequence of low molecular mass urokinase from human urine.</title>
        <authorList>
            <person name="Steffens G.J."/>
            <person name="Gunzler W.A."/>
            <person name="Otting F."/>
            <person name="Frankus E."/>
            <person name="Flohe L."/>
        </authorList>
    </citation>
    <scope>PROTEIN SEQUENCE OF 158-410</scope>
</reference>
<reference key="17">
    <citation type="journal article" date="1987" name="Biol. Chem. Hoppe-Seyler">
        <title>Inhibition of urokinase by protein C-inhibitor (PCI). Evidence for identity of PCI and plasminogen activator inhibitor 3.</title>
        <authorList>
            <person name="Stief T.W."/>
            <person name="Radtke K.P."/>
            <person name="Heimburger N."/>
        </authorList>
    </citation>
    <scope>ACTIVITY REGULATION</scope>
    <scope>HETERODIMER WITH SERPINA5</scope>
</reference>
<reference key="18">
    <citation type="journal article" date="1997" name="J. Cell Biol.">
        <title>Phosphorylation of human pro-urokinase on Ser138/303 impairs its receptor-dependent ability to promote myelomonocytic adherence and motility.</title>
        <authorList>
            <person name="Franco P."/>
            <person name="Iaccarino C."/>
            <person name="Chiaradonna F."/>
            <person name="Brandazza A."/>
            <person name="Iavarone C."/>
            <person name="Mastronicola M.R."/>
            <person name="Nolli M.L."/>
            <person name="Stoppelli M.P."/>
        </authorList>
    </citation>
    <scope>PHOSPHORYLATION AT SER-158 AND SER-323</scope>
    <scope>MUTAGENESIS OF SER-158 AND SER-323</scope>
</reference>
<reference key="19">
    <citation type="journal article" date="1999" name="Mol. Hum. Reprod.">
        <title>Functionally inactive protein C inhibitor in seminal plasma may be associated with infertility.</title>
        <authorList>
            <person name="He S."/>
            <person name="Lin Y.L."/>
            <person name="Liu Y.X."/>
        </authorList>
    </citation>
    <scope>HETERODIMER WITH SERPINA5</scope>
</reference>
<reference key="20">
    <citation type="journal article" date="2000" name="J. Biol. Chem.">
        <title>A urokinase receptor-associated protein with specific collagen binding properties.</title>
        <authorList>
            <person name="Behrendt N."/>
            <person name="Jensen O.N."/>
            <person name="Engelholm L.H."/>
            <person name="Moertz E."/>
            <person name="Mann M."/>
            <person name="Danoe K."/>
        </authorList>
    </citation>
    <scope>INTERACTION WITH MRC2</scope>
</reference>
<reference key="21">
    <citation type="journal article" date="2001" name="J. Biol. Chem.">
        <title>The putative tumor suppressor LRP1B, a novel member of the low density lipoprotein (LDL) receptor family, exhibits both overlapping and distinct properties with the LDL receptor-related protein.</title>
        <authorList>
            <person name="Liu C.-X."/>
            <person name="Li Y."/>
            <person name="Obermoeller-McCormick L.M."/>
            <person name="Schwartz A.L."/>
            <person name="Bu G."/>
        </authorList>
    </citation>
    <scope>INTERACTION WITH LRP1B</scope>
</reference>
<reference key="22">
    <citation type="journal article" date="2004" name="Biochem. J.">
        <title>The mosaic receptor sorLA/LR11 binds components of the plasminogen-activating system and platelet-derived growth factor-BB similarly to LRP1 (low-density lipoprotein receptor-related protein), but mediates slow internalization of bound ligand.</title>
        <authorList>
            <person name="Gliemann J."/>
            <person name="Hermey G."/>
            <person name="Nykjaer A."/>
            <person name="Petersen C.M."/>
            <person name="Jacobsen C."/>
            <person name="Andreasen P.A."/>
        </authorList>
    </citation>
    <scope>INTERACTION WITH LRP1; PLAUR; SERPINE1 AND SORL1</scope>
</reference>
<reference key="23">
    <citation type="journal article" date="2004" name="Int. J. Cancer">
        <title>Regulation of carcinoma cell invasion by protein C inhibitor whose expression is decreased in renal cell carcinoma.</title>
        <authorList>
            <person name="Wakita T."/>
            <person name="Hayashi T."/>
            <person name="Nishioka J."/>
            <person name="Tamaru H."/>
            <person name="Akita N."/>
            <person name="Asanuma K."/>
            <person name="Kamada H."/>
            <person name="Gabazza E.C."/>
            <person name="Ido M."/>
            <person name="Kawamura J."/>
            <person name="Suzuki K."/>
        </authorList>
    </citation>
    <scope>ACTIVITY REGULATION</scope>
    <scope>HETERODIMER WITH SERPINA5</scope>
</reference>
<reference key="24">
    <citation type="journal article" date="2005" name="Mol. Cell. Biol.">
        <title>Platelet-derived growth factor D is activated by urokinase plasminogen activator in prostate carcinoma cells.</title>
        <authorList>
            <person name="Ustach C.V."/>
            <person name="Kim H.-R.C."/>
        </authorList>
    </citation>
    <scope>TISSUE SPECIFICITY</scope>
</reference>
<reference key="25">
    <citation type="journal article" date="2010" name="Blood">
        <title>Persons with Quebec platelet disorder have a tandem duplication of PLAU, the urokinase plasminogen activator gene.</title>
        <authorList>
            <person name="Paterson A.D."/>
            <person name="Rommens J.M."/>
            <person name="Bharaj B."/>
            <person name="Blavignac J."/>
            <person name="Wong I."/>
            <person name="Diamandis M."/>
            <person name="Waye J.S."/>
            <person name="Rivard G.E."/>
            <person name="Hayward C.P."/>
        </authorList>
    </citation>
    <scope>INVOLVEMENT IN QPD</scope>
</reference>
<reference key="26">
    <citation type="journal article" date="2011" name="Biochem. Biophys. Res. Commun.">
        <title>Longistatin, a novel plasminogen activator from vector ticks, is resistant to plasminogen activator inhibitor-1.</title>
        <authorList>
            <person name="Anisuzzaman X."/>
            <person name="Khyrul Islam M."/>
            <person name="Abdul Alim M."/>
            <person name="Miyoshi T."/>
            <person name="Hatta T."/>
            <person name="Yamaji K."/>
            <person name="Matsumoto Y."/>
            <person name="Fujisaki K."/>
            <person name="Tsuji N."/>
        </authorList>
    </citation>
    <scope>ACTIVITY REGULATION</scope>
</reference>
<reference key="27">
    <citation type="journal article" date="2014" name="Biochem. Biophys. Res. Commun.">
        <title>TMPRSS4 induces cancer cell invasion through pro-uPA processing.</title>
        <authorList>
            <person name="Min H.J."/>
            <person name="Lee M.K."/>
            <person name="Lee J.W."/>
            <person name="Kim S."/>
        </authorList>
    </citation>
    <scope>PROTEALITICAL CLEAVAGE</scope>
    <scope>SUBCELLULAR LOCATION</scope>
</reference>
<reference key="28">
    <citation type="journal article" date="1989" name="Nature">
        <title>Dynamics of the multidomain fibrinolytic protein urokinase from two-dimensional NMR.</title>
        <authorList>
            <person name="Oswald R.E."/>
            <person name="Bogusky M.J."/>
            <person name="Bamberger M."/>
            <person name="Smith R.A.G."/>
            <person name="Dobson C.M."/>
        </authorList>
    </citation>
    <scope>STRUCTURE BY NMR</scope>
</reference>
<reference key="29">
    <citation type="journal article" date="1992" name="Biochemistry">
        <title>Sequential 1H NMR assignments and secondary structure of the kringle domain from urokinase.</title>
        <authorList>
            <person name="Li X."/>
            <person name="Smith R.A.G."/>
            <person name="Dobson C.M."/>
        </authorList>
    </citation>
    <scope>STRUCTURE BY NMR OF 67-155</scope>
</reference>
<reference key="30">
    <citation type="journal article" date="1994" name="J. Mol. Biol.">
        <title>Solution structure of the kringle domain from urokinase-type plasminogen activator.</title>
        <authorList>
            <person name="Li X."/>
            <person name="Bokman A.M."/>
            <person name="Llinas M."/>
            <person name="Smith R.A.G."/>
            <person name="Dobson C.M."/>
        </authorList>
    </citation>
    <scope>STRUCTURE BY NMR OF 67-155</scope>
</reference>
<reference key="31">
    <citation type="journal article" date="1995" name="Structure">
        <title>The crystal structure of the catalytic domain of human urokinase-type plasminogen activator.</title>
        <authorList>
            <person name="Spraggon G."/>
            <person name="Phillips C."/>
            <person name="Nowak U.K."/>
            <person name="Ponting C.P."/>
            <person name="Saunders D."/>
            <person name="Dobson C.M."/>
            <person name="Stuart D.I."/>
            <person name="Jones E.Y."/>
        </authorList>
    </citation>
    <scope>X-RAY CRYSTALLOGRAPHY (2.5 ANGSTROMS)</scope>
</reference>
<reference key="32">
    <citation type="journal article" date="2000" name="Proc. Natl. Acad. Sci. U.S.A.">
        <title>(4-aminomethyl)phenylguanidine derivatives as nonpeptidic highly selective inhibitors of human urokinase.</title>
        <authorList>
            <person name="Sperl S."/>
            <person name="Jacob U."/>
            <person name="Arroyo de Prada N."/>
            <person name="Sturzebecher J."/>
            <person name="Wilhelm O.G."/>
            <person name="Bode W."/>
            <person name="Magdolen V."/>
            <person name="Huber R."/>
            <person name="Moroder L."/>
        </authorList>
    </citation>
    <scope>X-RAY CRYSTALLOGRAPHY (1.8 ANGSTROMS) OF 159-411</scope>
</reference>
<reference key="33">
    <citation type="journal article" date="2006" name="Science">
        <title>Structure of human urokinase plasminogen activator in complex with its receptor.</title>
        <authorList>
            <person name="Huai Q."/>
            <person name="Mazar A.P."/>
            <person name="Kuo A."/>
            <person name="Parry G.C."/>
            <person name="Shaw D.E."/>
            <person name="Callahan J."/>
            <person name="Li Y."/>
            <person name="Yuan C."/>
            <person name="Bian C."/>
            <person name="Chen L."/>
            <person name="Furie B."/>
            <person name="Furie B.C."/>
            <person name="Cines D.B."/>
            <person name="Huang M."/>
        </authorList>
    </citation>
    <scope>X-RAY CRYSTALLOGRAPHY (1.9 ANGSTROMS) OF 31-152 IN COMPLEX WITH PLAUR</scope>
</reference>
<reference key="34">
    <citation type="journal article" date="1997" name="Thromb. Haemost.">
        <title>Detection of polymorphisms in the human urokinase-type plasminogen activator gene.</title>
        <authorList>
            <person name="Conne B."/>
            <person name="Berczy M."/>
            <person name="Belin D."/>
        </authorList>
    </citation>
    <scope>VARIANT PRO-141</scope>
</reference>
<reference key="35">
    <citation type="journal article" date="1997" name="Thromb. Haemost.">
        <authorList>
            <person name="Conne B."/>
            <person name="Berczy M."/>
            <person name="Belin D."/>
        </authorList>
    </citation>
    <scope>ERRATUM OF PUBMED:9065988</scope>
</reference>
<reference key="36">
    <citation type="journal article" date="1997" name="Electrophoresis">
        <title>Mutational analysis of the genes encoding urokinase-type plasminogen activator (uPA) and its inhibitor PAI-1 in advanced ovarian cancer.</title>
        <authorList>
            <person name="Turkmen B."/>
            <person name="Schmitt M."/>
            <person name="Schmalfeldt B."/>
            <person name="Trommler P."/>
            <person name="Hell W."/>
            <person name="Creutzburg S."/>
            <person name="Graeff H."/>
            <person name="Magdolen V."/>
        </authorList>
    </citation>
    <scope>VARIANT PRO-141</scope>
</reference>
<reference key="37">
    <citation type="journal article" date="2008" name="Nature">
        <title>DNA sequencing of a cytogenetically normal acute myeloid leukaemia genome.</title>
        <authorList>
            <person name="Ley T.J."/>
            <person name="Mardis E.R."/>
            <person name="Ding L."/>
            <person name="Fulton B."/>
            <person name="McLellan M.D."/>
            <person name="Chen K."/>
            <person name="Dooling D."/>
            <person name="Dunford-Shore B.H."/>
            <person name="McGrath S."/>
            <person name="Hickenbotham M."/>
            <person name="Cook L."/>
            <person name="Abbott R."/>
            <person name="Larson D.E."/>
            <person name="Koboldt D.C."/>
            <person name="Pohl C."/>
            <person name="Smith S."/>
            <person name="Hawkins A."/>
            <person name="Abbott S."/>
            <person name="Locke D."/>
            <person name="Hillier L.W."/>
            <person name="Miner T."/>
            <person name="Fulton L."/>
            <person name="Magrini V."/>
            <person name="Wylie T."/>
            <person name="Glasscock J."/>
            <person name="Conyers J."/>
            <person name="Sander N."/>
            <person name="Shi X."/>
            <person name="Osborne J.R."/>
            <person name="Minx P."/>
            <person name="Gordon D."/>
            <person name="Chinwalla A."/>
            <person name="Zhao Y."/>
            <person name="Ries R.E."/>
            <person name="Payton J.E."/>
            <person name="Westervelt P."/>
            <person name="Tomasson M.H."/>
            <person name="Watson M."/>
            <person name="Baty J."/>
            <person name="Ivanovich J."/>
            <person name="Heath S."/>
            <person name="Shannon W.D."/>
            <person name="Nagarajan R."/>
            <person name="Walter M.J."/>
            <person name="Link D.C."/>
            <person name="Graubert T.A."/>
            <person name="DiPersio J.F."/>
            <person name="Wilson R.K."/>
        </authorList>
    </citation>
    <scope>VARIANT [LARGE SCALE ANALYSIS] PRO-141</scope>
</reference>
<proteinExistence type="evidence at protein level"/>
<organism>
    <name type="scientific">Homo sapiens</name>
    <name type="common">Human</name>
    <dbReference type="NCBI Taxonomy" id="9606"/>
    <lineage>
        <taxon>Eukaryota</taxon>
        <taxon>Metazoa</taxon>
        <taxon>Chordata</taxon>
        <taxon>Craniata</taxon>
        <taxon>Vertebrata</taxon>
        <taxon>Euteleostomi</taxon>
        <taxon>Mammalia</taxon>
        <taxon>Eutheria</taxon>
        <taxon>Euarchontoglires</taxon>
        <taxon>Primates</taxon>
        <taxon>Haplorrhini</taxon>
        <taxon>Catarrhini</taxon>
        <taxon>Hominidae</taxon>
        <taxon>Homo</taxon>
    </lineage>
</organism>
<feature type="signal peptide" evidence="15 23">
    <location>
        <begin position="1"/>
        <end position="20"/>
    </location>
</feature>
<feature type="chain" id="PRO_0000028318" description="Urokinase-type plasminogen activator">
    <location>
        <begin position="21"/>
        <end position="431"/>
    </location>
</feature>
<feature type="chain" id="PRO_0000028319" description="Urokinase-type plasminogen activator long chain A">
    <location>
        <begin position="21"/>
        <end position="177"/>
    </location>
</feature>
<feature type="chain" id="PRO_0000028320" description="Urokinase-type plasminogen activator short chain A">
    <location>
        <begin position="156"/>
        <end position="177"/>
    </location>
</feature>
<feature type="chain" id="PRO_0000028321" description="Urokinase-type plasminogen activator chain B">
    <location>
        <begin position="179"/>
        <end position="431"/>
    </location>
</feature>
<feature type="domain" description="EGF-like" evidence="2">
    <location>
        <begin position="27"/>
        <end position="63"/>
    </location>
</feature>
<feature type="domain" description="Kringle" evidence="3">
    <location>
        <begin position="70"/>
        <end position="151"/>
    </location>
</feature>
<feature type="domain" description="Peptidase S1" evidence="4">
    <location>
        <begin position="179"/>
        <end position="424"/>
    </location>
</feature>
<feature type="region of interest" description="Binds urokinase plasminogen activator surface receptor" evidence="1">
    <location>
        <begin position="34"/>
        <end position="57"/>
    </location>
</feature>
<feature type="region of interest" description="Connecting peptide">
    <location>
        <begin position="152"/>
        <end position="177"/>
    </location>
</feature>
<feature type="active site" description="Charge relay system">
    <location>
        <position position="224"/>
    </location>
</feature>
<feature type="active site" description="Charge relay system">
    <location>
        <position position="275"/>
    </location>
</feature>
<feature type="active site" description="Charge relay system">
    <location>
        <position position="376"/>
    </location>
</feature>
<feature type="site" description="Cleavage; during zymogen activation">
    <location>
        <begin position="177"/>
        <end position="178"/>
    </location>
</feature>
<feature type="modified residue" description="Phosphoserine" evidence="25">
    <location>
        <position position="158"/>
    </location>
</feature>
<feature type="modified residue" description="Phosphoserine" evidence="25">
    <location>
        <position position="323"/>
    </location>
</feature>
<feature type="glycosylation site" description="O-linked (Fuc) threonine" evidence="15">
    <location>
        <position position="38"/>
    </location>
</feature>
<feature type="glycosylation site" id="CAR_000026" description="N-linked (GlcNAc...) asparagine">
    <location>
        <position position="322"/>
    </location>
</feature>
<feature type="disulfide bond">
    <location>
        <begin position="31"/>
        <end position="39"/>
    </location>
</feature>
<feature type="disulfide bond">
    <location>
        <begin position="33"/>
        <end position="51"/>
    </location>
</feature>
<feature type="disulfide bond">
    <location>
        <begin position="53"/>
        <end position="62"/>
    </location>
</feature>
<feature type="disulfide bond">
    <location>
        <begin position="70"/>
        <end position="151"/>
    </location>
</feature>
<feature type="disulfide bond">
    <location>
        <begin position="91"/>
        <end position="133"/>
    </location>
</feature>
<feature type="disulfide bond">
    <location>
        <begin position="122"/>
        <end position="146"/>
    </location>
</feature>
<feature type="disulfide bond" description="Interchain (between A and B chains)">
    <location>
        <begin position="168"/>
        <end position="299"/>
    </location>
</feature>
<feature type="disulfide bond">
    <location>
        <begin position="209"/>
        <end position="225"/>
    </location>
</feature>
<feature type="disulfide bond">
    <location>
        <begin position="217"/>
        <end position="288"/>
    </location>
</feature>
<feature type="disulfide bond">
    <location>
        <begin position="313"/>
        <end position="382"/>
    </location>
</feature>
<feature type="disulfide bond">
    <location>
        <begin position="345"/>
        <end position="361"/>
    </location>
</feature>
<feature type="disulfide bond">
    <location>
        <begin position="372"/>
        <end position="400"/>
    </location>
</feature>
<feature type="splice variant" id="VSP_038368" description="In isoform 2." evidence="31">
    <original>MRALLARLLLCVLVVSDSKGSNELHQVPS</original>
    <variation>MVFHLRTRYEQA</variation>
    <location>
        <begin position="1"/>
        <end position="29"/>
    </location>
</feature>
<feature type="sequence variant" id="VAR_038730" description="In dbSNP:rs2227580." evidence="29">
    <original>V</original>
    <variation>L</variation>
    <location>
        <position position="15"/>
    </location>
</feature>
<feature type="sequence variant" id="VAR_006722" description="In dbSNP:rs2227564." evidence="8 10 13 17 19 21 22 23 24 26 27 28 29 30">
    <original>L</original>
    <variation>P</variation>
    <location>
        <position position="141"/>
    </location>
</feature>
<feature type="sequence variant" id="VAR_013102" description="In dbSNP:rs1050120." evidence="19 22">
    <original>I</original>
    <variation>M</variation>
    <location>
        <position position="214"/>
    </location>
</feature>
<feature type="sequence variant" id="VAR_038731" description="In dbSNP:rs2227567." evidence="29">
    <original>K</original>
    <variation>Q</variation>
    <location>
        <position position="231"/>
    </location>
</feature>
<feature type="mutagenesis site" description="Abolishes phosphorylation, proadhesive function and ability to induce chemotactic response; when associated with E-323." evidence="25">
    <original>S</original>
    <variation>E</variation>
    <location>
        <position position="158"/>
    </location>
</feature>
<feature type="mutagenesis site" description="Abolishes phosphorylation, proadhesive function and ability to induce chemotactic response; when associated with E-158." evidence="25">
    <original>S</original>
    <variation>E</variation>
    <location>
        <position position="323"/>
    </location>
</feature>
<feature type="sequence conflict" description="In Ref. 6; BAG60754." evidence="33" ref="6">
    <original>D</original>
    <variation>G</variation>
    <location>
        <position position="150"/>
    </location>
</feature>
<feature type="sequence conflict" description="In Ref. 2; CAA26535." evidence="33" ref="2">
    <original>C</original>
    <variation>W</variation>
    <location>
        <position position="151"/>
    </location>
</feature>
<feature type="sequence conflict" description="In Ref. 2; CAA26535." evidence="33" ref="2">
    <original>G</original>
    <variation>C</variation>
    <location>
        <position position="386"/>
    </location>
</feature>
<feature type="sequence conflict" description="In Ref. 2; CAA26535." evidence="33" ref="2">
    <original>A</original>
    <variation>V</variation>
    <location>
        <position position="430"/>
    </location>
</feature>
<feature type="strand" evidence="38">
    <location>
        <begin position="34"/>
        <end position="36"/>
    </location>
</feature>
<feature type="strand" evidence="39">
    <location>
        <begin position="38"/>
        <end position="41"/>
    </location>
</feature>
<feature type="turn" evidence="39">
    <location>
        <begin position="43"/>
        <end position="47"/>
    </location>
</feature>
<feature type="strand" evidence="39">
    <location>
        <begin position="49"/>
        <end position="52"/>
    </location>
</feature>
<feature type="strand" evidence="39">
    <location>
        <begin position="57"/>
        <end position="59"/>
    </location>
</feature>
<feature type="strand" evidence="39">
    <location>
        <begin position="64"/>
        <end position="67"/>
    </location>
</feature>
<feature type="strand" evidence="41">
    <location>
        <begin position="70"/>
        <end position="72"/>
    </location>
</feature>
<feature type="strand" evidence="44">
    <location>
        <begin position="73"/>
        <end position="77"/>
    </location>
</feature>
<feature type="strand" evidence="38">
    <location>
        <begin position="86"/>
        <end position="89"/>
    </location>
</feature>
<feature type="strand" evidence="36">
    <location>
        <begin position="94"/>
        <end position="96"/>
    </location>
</feature>
<feature type="helix" evidence="39">
    <location>
        <begin position="99"/>
        <end position="101"/>
    </location>
</feature>
<feature type="strand" evidence="39">
    <location>
        <begin position="102"/>
        <end position="104"/>
    </location>
</feature>
<feature type="strand" evidence="42">
    <location>
        <begin position="106"/>
        <end position="108"/>
    </location>
</feature>
<feature type="helix" evidence="39">
    <location>
        <begin position="111"/>
        <end position="114"/>
    </location>
</feature>
<feature type="strand" evidence="39">
    <location>
        <begin position="117"/>
        <end position="119"/>
    </location>
</feature>
<feature type="strand" evidence="40">
    <location>
        <begin position="128"/>
        <end position="130"/>
    </location>
</feature>
<feature type="strand" evidence="39">
    <location>
        <begin position="132"/>
        <end position="137"/>
    </location>
</feature>
<feature type="strand" evidence="39">
    <location>
        <begin position="140"/>
        <end position="147"/>
    </location>
</feature>
<feature type="helix" evidence="35">
    <location>
        <begin position="162"/>
        <end position="165"/>
    </location>
</feature>
<feature type="strand" evidence="48">
    <location>
        <begin position="180"/>
        <end position="184"/>
    </location>
</feature>
<feature type="helix" evidence="48">
    <location>
        <begin position="187"/>
        <end position="189"/>
    </location>
</feature>
<feature type="strand" evidence="48">
    <location>
        <begin position="193"/>
        <end position="199"/>
    </location>
</feature>
<feature type="strand" evidence="46">
    <location>
        <begin position="201"/>
        <end position="203"/>
    </location>
</feature>
<feature type="strand" evidence="48">
    <location>
        <begin position="205"/>
        <end position="215"/>
    </location>
</feature>
<feature type="strand" evidence="48">
    <location>
        <begin position="218"/>
        <end position="221"/>
    </location>
</feature>
<feature type="helix" evidence="48">
    <location>
        <begin position="223"/>
        <end position="225"/>
    </location>
</feature>
<feature type="turn" evidence="48">
    <location>
        <begin position="226"/>
        <end position="228"/>
    </location>
</feature>
<feature type="helix" evidence="48">
    <location>
        <begin position="232"/>
        <end position="234"/>
    </location>
</feature>
<feature type="strand" evidence="48">
    <location>
        <begin position="235"/>
        <end position="240"/>
    </location>
</feature>
<feature type="strand" evidence="48">
    <location>
        <begin position="243"/>
        <end position="246"/>
    </location>
</feature>
<feature type="strand" evidence="48">
    <location>
        <begin position="252"/>
        <end position="261"/>
    </location>
</feature>
<feature type="strand" evidence="47">
    <location>
        <begin position="268"/>
        <end position="271"/>
    </location>
</feature>
<feature type="strand" evidence="48">
    <location>
        <begin position="272"/>
        <end position="274"/>
    </location>
</feature>
<feature type="strand" evidence="48">
    <location>
        <begin position="277"/>
        <end position="282"/>
    </location>
</feature>
<feature type="strand" evidence="37">
    <location>
        <begin position="293"/>
        <end position="295"/>
    </location>
</feature>
<feature type="strand" evidence="48">
    <location>
        <begin position="312"/>
        <end position="318"/>
    </location>
</feature>
<feature type="strand" evidence="45">
    <location>
        <begin position="329"/>
        <end position="331"/>
    </location>
</feature>
<feature type="strand" evidence="48">
    <location>
        <begin position="333"/>
        <end position="340"/>
    </location>
</feature>
<feature type="helix" evidence="48">
    <location>
        <begin position="342"/>
        <end position="345"/>
    </location>
</feature>
<feature type="turn" evidence="48">
    <location>
        <begin position="348"/>
        <end position="351"/>
    </location>
</feature>
<feature type="helix" evidence="48">
    <location>
        <begin position="352"/>
        <end position="354"/>
    </location>
</feature>
<feature type="turn" evidence="45">
    <location>
        <begin position="356"/>
        <end position="358"/>
    </location>
</feature>
<feature type="strand" evidence="48">
    <location>
        <begin position="359"/>
        <end position="363"/>
    </location>
</feature>
<feature type="strand" evidence="43">
    <location>
        <begin position="365"/>
        <end position="367"/>
    </location>
</feature>
<feature type="strand" evidence="48">
    <location>
        <begin position="379"/>
        <end position="384"/>
    </location>
</feature>
<feature type="strand" evidence="48">
    <location>
        <begin position="387"/>
        <end position="396"/>
    </location>
</feature>
<feature type="strand" evidence="48">
    <location>
        <begin position="398"/>
        <end position="402"/>
    </location>
</feature>
<feature type="strand" evidence="48">
    <location>
        <begin position="407"/>
        <end position="411"/>
    </location>
</feature>
<feature type="helix" evidence="48">
    <location>
        <begin position="412"/>
        <end position="414"/>
    </location>
</feature>
<feature type="helix" evidence="48">
    <location>
        <begin position="416"/>
        <end position="422"/>
    </location>
</feature>
<comment type="function">
    <text>Specifically cleaves the zymogen plasminogen to form the active enzyme plasmin.</text>
</comment>
<comment type="catalytic activity">
    <reaction>
        <text>Specific cleavage of Arg-|-Val bond in plasminogen to form plasmin.</text>
        <dbReference type="EC" id="3.4.21.73"/>
    </reaction>
</comment>
<comment type="activity regulation">
    <text evidence="7 16 20">Inhibited by SERPINA5 (PubMed:14696115, PubMed:3501295). Inhibited by SERPINE1 (PubMed:21925150).</text>
</comment>
<comment type="subunit">
    <text evidence="5 6 9 12">Found in high and low molecular mass forms. Each consists of two chains, A and B. The high molecular mass form contains a long chain A which is cleaved to yield a short chain A. Forms heterodimer with SERPINA5. Binds LRP1B; binding is followed by internalization and degradation. Interacts with MRC2. Interacts with PLAUR. In complex with SERPINE1, interacts with PLAUR/uPAR (PubMed:15053742). Interacts with SORL1 and LRP1, either alone or in complex with SERPINE1; these interactions are abolished in the presence of LRPAP1/RAP (PubMed:15053742). The ternary complex composed of PLAUR-PLAU-PAI1 also interacts with SORLA (PubMed:15053742).</text>
</comment>
<comment type="interaction">
    <interactant intactId="EBI-3905042">
        <id>P00749</id>
    </interactant>
    <interactant intactId="EBI-1384181">
        <id>Q9UKQ2</id>
        <label>ADAM28</label>
    </interactant>
    <organismsDiffer>false</organismsDiffer>
    <experiments>3</experiments>
</comment>
<comment type="interaction">
    <interactant intactId="EBI-3905042">
        <id>P00749</id>
    </interactant>
    <interactant intactId="EBI-77613">
        <id>P05067</id>
        <label>APP</label>
    </interactant>
    <organismsDiffer>false</organismsDiffer>
    <experiments>3</experiments>
</comment>
<comment type="interaction">
    <interactant intactId="EBI-3905042">
        <id>P00749</id>
    </interactant>
    <interactant intactId="EBI-15695188">
        <id>Q03405-1</id>
        <label>PLAUR</label>
    </interactant>
    <organismsDiffer>false</organismsDiffer>
    <experiments>2</experiments>
</comment>
<comment type="interaction">
    <interactant intactId="EBI-3905042">
        <id>P00749</id>
    </interactant>
    <interactant intactId="EBI-953978">
        <id>P05121</id>
        <label>SERPINE1</label>
    </interactant>
    <organismsDiffer>false</organismsDiffer>
    <experiments>2</experiments>
</comment>
<comment type="interaction">
    <interactant intactId="EBI-3905042">
        <id>P00749</id>
    </interactant>
    <interactant intactId="EBI-8830896">
        <id>P55000</id>
        <label>SLURP1</label>
    </interactant>
    <organismsDiffer>false</organismsDiffer>
    <experiments>2</experiments>
</comment>
<comment type="subcellular location">
    <subcellularLocation>
        <location evidence="18">Secreted</location>
    </subcellularLocation>
</comment>
<comment type="alternative products">
    <event type="alternative splicing"/>
    <isoform>
        <id>P00749-1</id>
        <name>1</name>
        <sequence type="displayed"/>
    </isoform>
    <isoform>
        <id>P00749-2</id>
        <name>2</name>
        <sequence type="described" ref="VSP_038368"/>
    </isoform>
</comment>
<comment type="tissue specificity">
    <text evidence="11">Expressed in the prostate gland and prostate cancers.</text>
</comment>
<comment type="PTM">
    <text evidence="25">Phosphorylation of Ser-158 and Ser-323 abolishes proadhesive ability but does not interfere with receptor binding.</text>
</comment>
<comment type="PTM">
    <text evidence="18">Produced as an inactive single-chain protein (pro-uPA or sc-uPA), is processed into the active disulfide-linked two-chain form of PLAU/uPA by a proteolytic event mediated, at least, by TMPRSS4.</text>
</comment>
<comment type="disease" evidence="14">
    <disease id="DI-03256">
        <name>Quebec platelet disorder</name>
        <acronym>QPD</acronym>
        <description>An autosomal dominant bleeding disorder due to a gain-of-function defect in fibrinolysis. Although affected individuals do not exhibit systemic fibrinolysis, they show delayed onset bleeding after challenge, such as surgery. The hallmark of the disorder is markedly increased PLAU levels within platelets, which causes intraplatelet plasmin generation and secondary degradation of alpha-granule proteins.</description>
        <dbReference type="MIM" id="601709"/>
    </disease>
    <text>The disease is caused by variants affecting the gene represented in this entry.</text>
</comment>
<comment type="pharmaceutical">
    <text>Available under the name Abbokinase (Abbott). Used in Pulmonary Embolism (PE) to initiate fibrinolysis. Clinically used for therapy of thrombolytic disorders.</text>
</comment>
<comment type="similarity">
    <text evidence="4">Belongs to the peptidase S1 family.</text>
</comment>
<comment type="online information" name="Wikipedia">
    <link uri="https://en.wikipedia.org/wiki/Urokinase"/>
    <text>Urokinase entry</text>
</comment>
<accession>P00749</accession>
<accession>B4DPZ2</accession>
<accession>Q15844</accession>
<accession>Q16618</accession>
<accession>Q53XS3</accession>
<accession>Q5SWW9</accession>
<accession>Q969W6</accession>
<keyword id="KW-0002">3D-structure</keyword>
<keyword id="KW-0025">Alternative splicing</keyword>
<keyword id="KW-0094">Blood coagulation</keyword>
<keyword id="KW-0903">Direct protein sequencing</keyword>
<keyword id="KW-1015">Disulfide bond</keyword>
<keyword id="KW-0245">EGF-like domain</keyword>
<keyword id="KW-0280">Fibrinolysis</keyword>
<keyword id="KW-0325">Glycoprotein</keyword>
<keyword id="KW-0356">Hemostasis</keyword>
<keyword id="KW-0378">Hydrolase</keyword>
<keyword id="KW-0420">Kringle</keyword>
<keyword id="KW-0582">Pharmaceutical</keyword>
<keyword id="KW-0597">Phosphoprotein</keyword>
<keyword id="KW-0617">Plasminogen activation</keyword>
<keyword id="KW-0645">Protease</keyword>
<keyword id="KW-1267">Proteomics identification</keyword>
<keyword id="KW-1185">Reference proteome</keyword>
<keyword id="KW-0964">Secreted</keyword>
<keyword id="KW-0720">Serine protease</keyword>
<keyword id="KW-0732">Signal</keyword>
<keyword id="KW-0865">Zymogen</keyword>
<name>UROK_HUMAN</name>
<sequence>MRALLARLLLCVLVVSDSKGSNELHQVPSNCDCLNGGTCVSNKYFSNIHWCNCPKKFGGQHCEIDKSKTCYEGNGHFYRGKASTDTMGRPCLPWNSATVLQQTYHAHRSDALQLGLGKHNYCRNPDNRRRPWCYVQVGLKLLVQECMVHDCADGKKPSSPPEELKFQCGQKTLRPRFKIIGGEFTTIENQPWFAAIYRRHRGGSVTYVCGGSLISPCWVISATHCFIDYPKKEDYIVYLGRSRLNSNTQGEMKFEVENLILHKDYSADTLAHHNDIALLKIRSKEGRCAQPSRTIQTICLPSMYNDPQFGTSCEITGFGKENSTDYLYPEQLKMTVVKLISHRECQQPHYYGSEVTTKMLCAADPQWKTDSCQGDSGGPLVCSLQGRMTLTGIVSWGRGCALKDKPGVYTRVSHFLPWIRSHTKEENGLAL</sequence>